<reference key="1">
    <citation type="journal article" date="1992" name="Biochem. Biophys. Res. Commun.">
        <title>Structure and chromosomal location of the human granulin gene.</title>
        <authorList>
            <person name="Bhandari V."/>
            <person name="Bateman A."/>
        </authorList>
    </citation>
    <scope>NUCLEOTIDE SEQUENCE [MRNA]</scope>
    <scope>SEQUENCE REVISION</scope>
</reference>
<reference key="2">
    <citation type="journal article" date="1992" name="J. Biol. Chem.">
        <title>The epithelin precursor encodes two proteins with opposing activities on epithelial cell growth.</title>
        <authorList>
            <person name="Plowman G.D."/>
            <person name="Green J.M."/>
            <person name="Neubauer M.G."/>
            <person name="Buckley S.D."/>
            <person name="McDonald V.L."/>
            <person name="Todaro G.J."/>
            <person name="Shoyab M."/>
        </authorList>
    </citation>
    <scope>NUCLEOTIDE SEQUENCE [MRNA]</scope>
    <source>
        <tissue>Kidney</tissue>
    </source>
</reference>
<reference key="3">
    <citation type="journal article" date="1992" name="Proc. Natl. Acad. Sci. U.S.A.">
        <title>Isolation and sequence of the granulin precursor cDNA from human bone marrow reveals tandem cysteine-rich granulin domains.</title>
        <authorList>
            <person name="Bhandari V."/>
            <person name="Palfree R.G.E."/>
            <person name="Bateman A."/>
        </authorList>
    </citation>
    <scope>NUCLEOTIDE SEQUENCE [MRNA]</scope>
    <scope>PARTIAL PROTEIN SEQUENCE</scope>
    <source>
        <tissue>Bone marrow</tissue>
    </source>
</reference>
<reference key="4">
    <citation type="submission" date="2002-06" db="EMBL/GenBank/DDBJ databases">
        <title>PCDGF sequence from lambda phage human Jurkat T cell cDNA library (Clontech).</title>
        <authorList>
            <person name="Lu R."/>
            <person name="Tian C."/>
            <person name="Serrero G."/>
        </authorList>
    </citation>
    <scope>NUCLEOTIDE SEQUENCE [MRNA] (ISOFORM 1)</scope>
</reference>
<reference key="5">
    <citation type="submission" date="1998-03" db="EMBL/GenBank/DDBJ databases">
        <authorList>
            <person name="Yu W."/>
            <person name="Gibbs R.A."/>
        </authorList>
    </citation>
    <scope>NUCLEOTIDE SEQUENCE [LARGE SCALE MRNA]</scope>
    <source>
        <tissue>Brain</tissue>
    </source>
</reference>
<reference key="6">
    <citation type="submission" date="2003-05" db="EMBL/GenBank/DDBJ databases">
        <title>Cloning of human full-length CDSs in BD Creator(TM) system donor vector.</title>
        <authorList>
            <person name="Kalnine N."/>
            <person name="Chen X."/>
            <person name="Rolfs A."/>
            <person name="Halleck A."/>
            <person name="Hines L."/>
            <person name="Eisenstein S."/>
            <person name="Koundinya M."/>
            <person name="Raphael J."/>
            <person name="Moreira D."/>
            <person name="Kelley T."/>
            <person name="LaBaer J."/>
            <person name="Lin Y."/>
            <person name="Phelan M."/>
            <person name="Farmer A."/>
        </authorList>
    </citation>
    <scope>NUCLEOTIDE SEQUENCE [LARGE SCALE MRNA] (ISOFORM 2)</scope>
</reference>
<reference key="7">
    <citation type="journal article" date="2004" name="Nat. Genet.">
        <title>Complete sequencing and characterization of 21,243 full-length human cDNAs.</title>
        <authorList>
            <person name="Ota T."/>
            <person name="Suzuki Y."/>
            <person name="Nishikawa T."/>
            <person name="Otsuki T."/>
            <person name="Sugiyama T."/>
            <person name="Irie R."/>
            <person name="Wakamatsu A."/>
            <person name="Hayashi K."/>
            <person name="Sato H."/>
            <person name="Nagai K."/>
            <person name="Kimura K."/>
            <person name="Makita H."/>
            <person name="Sekine M."/>
            <person name="Obayashi M."/>
            <person name="Nishi T."/>
            <person name="Shibahara T."/>
            <person name="Tanaka T."/>
            <person name="Ishii S."/>
            <person name="Yamamoto J."/>
            <person name="Saito K."/>
            <person name="Kawai Y."/>
            <person name="Isono Y."/>
            <person name="Nakamura Y."/>
            <person name="Nagahari K."/>
            <person name="Murakami K."/>
            <person name="Yasuda T."/>
            <person name="Iwayanagi T."/>
            <person name="Wagatsuma M."/>
            <person name="Shiratori A."/>
            <person name="Sudo H."/>
            <person name="Hosoiri T."/>
            <person name="Kaku Y."/>
            <person name="Kodaira H."/>
            <person name="Kondo H."/>
            <person name="Sugawara M."/>
            <person name="Takahashi M."/>
            <person name="Kanda K."/>
            <person name="Yokoi T."/>
            <person name="Furuya T."/>
            <person name="Kikkawa E."/>
            <person name="Omura Y."/>
            <person name="Abe K."/>
            <person name="Kamihara K."/>
            <person name="Katsuta N."/>
            <person name="Sato K."/>
            <person name="Tanikawa M."/>
            <person name="Yamazaki M."/>
            <person name="Ninomiya K."/>
            <person name="Ishibashi T."/>
            <person name="Yamashita H."/>
            <person name="Murakawa K."/>
            <person name="Fujimori K."/>
            <person name="Tanai H."/>
            <person name="Kimata M."/>
            <person name="Watanabe M."/>
            <person name="Hiraoka S."/>
            <person name="Chiba Y."/>
            <person name="Ishida S."/>
            <person name="Ono Y."/>
            <person name="Takiguchi S."/>
            <person name="Watanabe S."/>
            <person name="Yosida M."/>
            <person name="Hotuta T."/>
            <person name="Kusano J."/>
            <person name="Kanehori K."/>
            <person name="Takahashi-Fujii A."/>
            <person name="Hara H."/>
            <person name="Tanase T.-O."/>
            <person name="Nomura Y."/>
            <person name="Togiya S."/>
            <person name="Komai F."/>
            <person name="Hara R."/>
            <person name="Takeuchi K."/>
            <person name="Arita M."/>
            <person name="Imose N."/>
            <person name="Musashino K."/>
            <person name="Yuuki H."/>
            <person name="Oshima A."/>
            <person name="Sasaki N."/>
            <person name="Aotsuka S."/>
            <person name="Yoshikawa Y."/>
            <person name="Matsunawa H."/>
            <person name="Ichihara T."/>
            <person name="Shiohata N."/>
            <person name="Sano S."/>
            <person name="Moriya S."/>
            <person name="Momiyama H."/>
            <person name="Satoh N."/>
            <person name="Takami S."/>
            <person name="Terashima Y."/>
            <person name="Suzuki O."/>
            <person name="Nakagawa S."/>
            <person name="Senoh A."/>
            <person name="Mizoguchi H."/>
            <person name="Goto Y."/>
            <person name="Shimizu F."/>
            <person name="Wakebe H."/>
            <person name="Hishigaki H."/>
            <person name="Watanabe T."/>
            <person name="Sugiyama A."/>
            <person name="Takemoto M."/>
            <person name="Kawakami B."/>
            <person name="Yamazaki M."/>
            <person name="Watanabe K."/>
            <person name="Kumagai A."/>
            <person name="Itakura S."/>
            <person name="Fukuzumi Y."/>
            <person name="Fujimori Y."/>
            <person name="Komiyama M."/>
            <person name="Tashiro H."/>
            <person name="Tanigami A."/>
            <person name="Fujiwara T."/>
            <person name="Ono T."/>
            <person name="Yamada K."/>
            <person name="Fujii Y."/>
            <person name="Ozaki K."/>
            <person name="Hirao M."/>
            <person name="Ohmori Y."/>
            <person name="Kawabata A."/>
            <person name="Hikiji T."/>
            <person name="Kobatake N."/>
            <person name="Inagaki H."/>
            <person name="Ikema Y."/>
            <person name="Okamoto S."/>
            <person name="Okitani R."/>
            <person name="Kawakami T."/>
            <person name="Noguchi S."/>
            <person name="Itoh T."/>
            <person name="Shigeta K."/>
            <person name="Senba T."/>
            <person name="Matsumura K."/>
            <person name="Nakajima Y."/>
            <person name="Mizuno T."/>
            <person name="Morinaga M."/>
            <person name="Sasaki M."/>
            <person name="Togashi T."/>
            <person name="Oyama M."/>
            <person name="Hata H."/>
            <person name="Watanabe M."/>
            <person name="Komatsu T."/>
            <person name="Mizushima-Sugano J."/>
            <person name="Satoh T."/>
            <person name="Shirai Y."/>
            <person name="Takahashi Y."/>
            <person name="Nakagawa K."/>
            <person name="Okumura K."/>
            <person name="Nagase T."/>
            <person name="Nomura N."/>
            <person name="Kikuchi H."/>
            <person name="Masuho Y."/>
            <person name="Yamashita R."/>
            <person name="Nakai K."/>
            <person name="Yada T."/>
            <person name="Nakamura Y."/>
            <person name="Ohara O."/>
            <person name="Isogai T."/>
            <person name="Sugano S."/>
        </authorList>
    </citation>
    <scope>NUCLEOTIDE SEQUENCE [LARGE SCALE MRNA] (ISOFORM 3)</scope>
    <source>
        <tissue>Ovary</tissue>
    </source>
</reference>
<reference key="8">
    <citation type="submission" date="2005-04" db="EMBL/GenBank/DDBJ databases">
        <authorList>
            <person name="Suzuki Y."/>
            <person name="Sugano S."/>
            <person name="Totoki Y."/>
            <person name="Toyoda A."/>
            <person name="Takeda T."/>
            <person name="Sakaki Y."/>
            <person name="Tanaka A."/>
            <person name="Yokoyama S."/>
        </authorList>
    </citation>
    <scope>NUCLEOTIDE SEQUENCE [LARGE SCALE MRNA] (ISOFORM 1)</scope>
    <source>
        <tissue>Adipose tissue</tissue>
    </source>
</reference>
<reference key="9">
    <citation type="submission" date="2005-09" db="EMBL/GenBank/DDBJ databases">
        <authorList>
            <person name="Mural R.J."/>
            <person name="Istrail S."/>
            <person name="Sutton G.G."/>
            <person name="Florea L."/>
            <person name="Halpern A.L."/>
            <person name="Mobarry C.M."/>
            <person name="Lippert R."/>
            <person name="Walenz B."/>
            <person name="Shatkay H."/>
            <person name="Dew I."/>
            <person name="Miller J.R."/>
            <person name="Flanigan M.J."/>
            <person name="Edwards N.J."/>
            <person name="Bolanos R."/>
            <person name="Fasulo D."/>
            <person name="Halldorsson B.V."/>
            <person name="Hannenhalli S."/>
            <person name="Turner R."/>
            <person name="Yooseph S."/>
            <person name="Lu F."/>
            <person name="Nusskern D.R."/>
            <person name="Shue B.C."/>
            <person name="Zheng X.H."/>
            <person name="Zhong F."/>
            <person name="Delcher A.L."/>
            <person name="Huson D.H."/>
            <person name="Kravitz S.A."/>
            <person name="Mouchard L."/>
            <person name="Reinert K."/>
            <person name="Remington K.A."/>
            <person name="Clark A.G."/>
            <person name="Waterman M.S."/>
            <person name="Eichler E.E."/>
            <person name="Adams M.D."/>
            <person name="Hunkapiller M.W."/>
            <person name="Myers E.W."/>
            <person name="Venter J.C."/>
        </authorList>
    </citation>
    <scope>NUCLEOTIDE SEQUENCE [LARGE SCALE GENOMIC DNA]</scope>
</reference>
<reference key="10">
    <citation type="journal article" date="2004" name="Genome Res.">
        <title>The status, quality, and expansion of the NIH full-length cDNA project: the Mammalian Gene Collection (MGC).</title>
        <authorList>
            <consortium name="The MGC Project Team"/>
        </authorList>
    </citation>
    <scope>NUCLEOTIDE SEQUENCE [LARGE SCALE MRNA] (ISOFORMS 1 AND 2)</scope>
    <source>
        <tissue>Cervix</tissue>
        <tissue>Lung</tissue>
    </source>
</reference>
<reference key="11">
    <citation type="journal article" date="2002" name="Cell">
        <title>Conversion of proepithelin to epithelins: roles of SLPI and elastase in host defense and wound repair.</title>
        <authorList>
            <person name="Zhu J."/>
            <person name="Nathan C."/>
            <person name="Jin W."/>
            <person name="Sim D."/>
            <person name="Ashcroft G.S."/>
            <person name="Wahl S.M."/>
            <person name="Lacomis L."/>
            <person name="Erdjument-Bromage H."/>
            <person name="Tempst P."/>
            <person name="Wright C.D."/>
            <person name="Ding A."/>
        </authorList>
    </citation>
    <scope>PROTEIN SEQUENCE OF 51-62; 122-131; 351-357; 361-367; 435-446 AND 517-526</scope>
    <scope>INTERACTION WITH SLPI</scope>
    <scope>PROTEOLYTIC CLEAVAGE</scope>
    <scope>FUNCTION</scope>
</reference>
<reference key="12">
    <citation type="journal article" date="1990" name="Biochem. Biophys. Res. Commun.">
        <title>Granulins, a novel class of peptide from leukocytes.</title>
        <authorList>
            <person name="Bateman A."/>
            <person name="Belcourt D.R."/>
            <person name="Bennett H.P."/>
            <person name="Lazure C."/>
            <person name="Solomon S."/>
        </authorList>
    </citation>
    <scope>PROTEIN SEQUENCE OF 206-233; 281-336; 364-396 AND 442-447</scope>
    <source>
        <tissue>Leukocyte</tissue>
    </source>
</reference>
<reference key="13">
    <citation type="journal article" date="1993" name="Br. J. Cancer">
        <title>Characterisation of UGP and its relationship with beta-core fragment.</title>
        <authorList>
            <person name="Kardana A."/>
            <person name="Bagshawe K.D."/>
            <person name="Coles B."/>
            <person name="Read D."/>
            <person name="Taylor M."/>
        </authorList>
    </citation>
    <scope>PROTEIN SEQUENCE OF 281-295</scope>
</reference>
<reference key="14">
    <citation type="journal article" date="2006" name="Nature">
        <title>Mutations in progranulin cause tau-negative frontotemporal dementia linked to chromosome 17.</title>
        <authorList>
            <person name="Baker M."/>
            <person name="Mackenzie I.R."/>
            <person name="Pickering-Brown S.M."/>
            <person name="Gass J."/>
            <person name="Rademakers R."/>
            <person name="Lindholm C."/>
            <person name="Snowden J."/>
            <person name="Adamson J."/>
            <person name="Sadovnick A.D."/>
            <person name="Rollinson S."/>
            <person name="Cannon A."/>
            <person name="Dwosh E."/>
            <person name="Neary D."/>
            <person name="Melquist S."/>
            <person name="Richardson A."/>
            <person name="Dickson D."/>
            <person name="Berger Z."/>
            <person name="Eriksen J."/>
            <person name="Robinson T."/>
            <person name="Zehr C."/>
            <person name="Dickey C.A."/>
            <person name="Crook R."/>
            <person name="McGowan E."/>
            <person name="Mann D."/>
            <person name="Boeve B."/>
            <person name="Feldman H."/>
            <person name="Hutton M."/>
        </authorList>
    </citation>
    <scope>INVOLVEMENT IN FTD2</scope>
</reference>
<reference key="15">
    <citation type="journal article" date="2008" name="J. Cell Biol.">
        <title>Progranulin functions as a neurotrophic factor to regulate neurite outgrowth and enhance neuronal survival.</title>
        <authorList>
            <person name="Van Damme P."/>
            <person name="Van Hoecke A."/>
            <person name="Lambrechts D."/>
            <person name="Vanacker P."/>
            <person name="Bogaert E."/>
            <person name="van Swieten J."/>
            <person name="Carmeliet P."/>
            <person name="Van Den Bosch L."/>
            <person name="Robberecht W."/>
        </authorList>
    </citation>
    <scope>FUNCTION</scope>
</reference>
<reference key="16">
    <citation type="journal article" date="2009" name="J. Proteome Res.">
        <title>Glycoproteomics analysis of human liver tissue by combination of multiple enzyme digestion and hydrazide chemistry.</title>
        <authorList>
            <person name="Chen R."/>
            <person name="Jiang X."/>
            <person name="Sun D."/>
            <person name="Han G."/>
            <person name="Wang F."/>
            <person name="Ye M."/>
            <person name="Wang L."/>
            <person name="Zou H."/>
        </authorList>
    </citation>
    <scope>GLYCOSYLATION [LARGE SCALE ANALYSIS] AT ASN-265</scope>
    <source>
        <tissue>Liver</tissue>
    </source>
</reference>
<reference key="17">
    <citation type="journal article" date="2010" name="J. Proteomics">
        <title>Development and application of mass spectrometric methods for the analysis of progranulin N-glycosylation.</title>
        <authorList>
            <person name="Songsrirote K."/>
            <person name="Li Z."/>
            <person name="Ashford D."/>
            <person name="Bateman A."/>
            <person name="Thomas-Oates J."/>
        </authorList>
    </citation>
    <scope>GLYCOSYLATION AT ASN-118; ASN-265; ASN-368 AND ASN-530</scope>
</reference>
<reference key="18">
    <citation type="journal article" date="2010" name="Neuron">
        <title>Sortilin-mediated endocytosis determines levels of the frontotemporal dementia protein, progranulin.</title>
        <authorList>
            <person name="Hu F."/>
            <person name="Padukkavidana T."/>
            <person name="Vaegter C.B."/>
            <person name="Brady O.A."/>
            <person name="Zheng Y."/>
            <person name="Mackenzie I.R."/>
            <person name="Feldman H.H."/>
            <person name="Nykjaer A."/>
            <person name="Strittmatter S.M."/>
        </authorList>
    </citation>
    <scope>INTERACTION WITH SORT1</scope>
    <scope>SUBCELLULAR LOCATION</scope>
</reference>
<reference key="19">
    <citation type="journal article" date="2012" name="Am. J. Hum. Genet.">
        <title>Strikingly different clinicopathological phenotypes determined by progranulin-mutation dosage.</title>
        <authorList>
            <person name="Smith K.R."/>
            <person name="Damiano J."/>
            <person name="Franceschetti S."/>
            <person name="Carpenter S."/>
            <person name="Canafoglia L."/>
            <person name="Morbin M."/>
            <person name="Rossi G."/>
            <person name="Pareyson D."/>
            <person name="Mole S.E."/>
            <person name="Staropoli J.F."/>
            <person name="Sims K.B."/>
            <person name="Lewis J."/>
            <person name="Lin W.L."/>
            <person name="Dickson D.W."/>
            <person name="Dahl H.H."/>
            <person name="Bahlo M."/>
            <person name="Berkovic S.F."/>
        </authorList>
    </citation>
    <scope>INVOLVEMENT IN CLN11</scope>
</reference>
<reference key="20">
    <citation type="journal article" date="2013" name="J. Biol. Chem.">
        <title>Secreted progranulin is a homodimer and is not a component of high density lipoproteins (HDL).</title>
        <authorList>
            <person name="Nguyen A.D."/>
            <person name="Nguyen T.A."/>
            <person name="Cenik B."/>
            <person name="Yu G."/>
            <person name="Herz J."/>
            <person name="Walther T.C."/>
            <person name="Davidson W.S."/>
            <person name="Farese R.V. Jr."/>
        </authorList>
    </citation>
    <scope>SUBUNIT</scope>
</reference>
<reference key="21">
    <citation type="journal article" date="2014" name="J. Proteomics">
        <title>An enzyme assisted RP-RPLC approach for in-depth analysis of human liver phosphoproteome.</title>
        <authorList>
            <person name="Bian Y."/>
            <person name="Song C."/>
            <person name="Cheng K."/>
            <person name="Dong M."/>
            <person name="Wang F."/>
            <person name="Huang J."/>
            <person name="Sun D."/>
            <person name="Wang L."/>
            <person name="Ye M."/>
            <person name="Zou H."/>
        </authorList>
    </citation>
    <scope>IDENTIFICATION BY MASS SPECTROMETRY [LARGE SCALE ANALYSIS]</scope>
    <source>
        <tissue>Liver</tissue>
    </source>
</reference>
<reference key="22">
    <citation type="journal article" date="2015" name="J. Cell Biol.">
        <title>Prosaposin facilitates sortilin-independent lysosomal trafficking of progranulin.</title>
        <authorList>
            <person name="Zhou X."/>
            <person name="Sun L."/>
            <person name="Bastos de Oliveira F."/>
            <person name="Qi X."/>
            <person name="Brown W.J."/>
            <person name="Smolka M.B."/>
            <person name="Sun Y."/>
            <person name="Hu F."/>
        </authorList>
    </citation>
    <scope>INTERACTION WITH PSAP</scope>
    <scope>SUBCELLULAR LOCATION</scope>
</reference>
<reference key="23">
    <citation type="journal article" date="2015" name="Proteomics">
        <title>N-terminome analysis of the human mitochondrial proteome.</title>
        <authorList>
            <person name="Vaca Jacome A.S."/>
            <person name="Rabilloud T."/>
            <person name="Schaeffer-Reiss C."/>
            <person name="Rompais M."/>
            <person name="Ayoub D."/>
            <person name="Lane L."/>
            <person name="Bairoch A."/>
            <person name="Van Dorsselaer A."/>
            <person name="Carapito C."/>
        </authorList>
    </citation>
    <scope>IDENTIFICATION BY MASS SPECTROMETRY [LARGE SCALE ANALYSIS]</scope>
</reference>
<reference key="24">
    <citation type="journal article" date="2016" name="EBioMedicine">
        <title>Progranulin Recruits HSP70 to beta-Glucocerebrosidase and Is Therapeutic Against Gaucher Disease.</title>
        <authorList>
            <person name="Jian J."/>
            <person name="Tian Q.Y."/>
            <person name="Hettinghouse A."/>
            <person name="Zhao S."/>
            <person name="Liu H."/>
            <person name="Wei J."/>
            <person name="Grunig G."/>
            <person name="Zhang W."/>
            <person name="Setchell K.D.R."/>
            <person name="Sun Y."/>
            <person name="Overkleeft H.S."/>
            <person name="Chan G.L."/>
            <person name="Liu C.J."/>
        </authorList>
    </citation>
    <scope>INTERACTION WITH GBA1 AND HSPA1A</scope>
</reference>
<reference key="25">
    <citation type="journal article" date="2017" name="Hum. Mol. Genet.">
        <title>Progranulin regulates lysosomal function and biogenesis through acidification of lysosomes.</title>
        <authorList>
            <person name="Tanaka Y."/>
            <person name="Suzuki G."/>
            <person name="Matsuwaki T."/>
            <person name="Hosokawa M."/>
            <person name="Serrano G."/>
            <person name="Beach T.G."/>
            <person name="Yamanouchi K."/>
            <person name="Hasegawa M."/>
            <person name="Nishihara M."/>
        </authorList>
    </citation>
    <scope>FUNCTION</scope>
    <scope>INDUCTION</scope>
    <scope>SUBCELLULAR LOCATION</scope>
</reference>
<reference key="26">
    <citation type="journal article" date="2017" name="Hum. Mol. Genet.">
        <title>Progranulin functions as a cathepsin D chaperone to stimulate axonal outgrowth in vivo.</title>
        <authorList>
            <person name="Beel S."/>
            <person name="Moisse M."/>
            <person name="Damme M."/>
            <person name="De Muynck L."/>
            <person name="Robberecht W."/>
            <person name="Van Den Bosch L."/>
            <person name="Saftig P."/>
            <person name="Van Damme P."/>
        </authorList>
    </citation>
    <scope>FUNCTION</scope>
    <scope>INTERACTION WITH CTSD</scope>
</reference>
<reference key="27">
    <citation type="journal article" date="2017" name="Mol. Neurodegener.">
        <title>The lysosomal protein cathepsin L is a progranulin protease.</title>
        <authorList>
            <person name="Lee C.W."/>
            <person name="Stankowski J.N."/>
            <person name="Chew J."/>
            <person name="Cook C.N."/>
            <person name="Lam Y.W."/>
            <person name="Almeida S."/>
            <person name="Carlomagno Y."/>
            <person name="Lau K.F."/>
            <person name="Prudencio M."/>
            <person name="Gao F.B."/>
            <person name="Bogyo M."/>
            <person name="Dickson D.W."/>
            <person name="Petrucelli L."/>
        </authorList>
    </citation>
    <scope>PROTEOLYTIC CLEAVAGE BY CTSL AND ELANE</scope>
    <scope>IDENTIFICATION BY MASS SPECTROMETRY</scope>
    <scope>SUBCELLULAR LOCATION</scope>
</reference>
<reference key="28">
    <citation type="journal article" date="2017" name="Nat. Commun.">
        <title>Impaired prosaposin lysosomal trafficking in frontotemporal lobar degeneration due to progranulin mutations.</title>
        <authorList>
            <person name="Zhou X."/>
            <person name="Sun L."/>
            <person name="Bracko O."/>
            <person name="Choi J.W."/>
            <person name="Jia Y."/>
            <person name="Nana A.L."/>
            <person name="Brady O.A."/>
            <person name="Hernandez J.C.C."/>
            <person name="Nishimura N."/>
            <person name="Seeley W.W."/>
            <person name="Hu F."/>
        </authorList>
    </citation>
    <scope>FUNCTION</scope>
    <scope>INTERACTION WITH PSAP AND SORT1</scope>
    <scope>SUBCELLULAR LOCATION</scope>
</reference>
<reference key="29">
    <citation type="journal article" date="2000" name="Biochemistry">
        <title>Design and solution structure of a well-folded stack of two beta-hairpins based on the amino-terminal fragment of human granulin A.</title>
        <authorList>
            <person name="Tolkatchev D."/>
            <person name="Ng A."/>
            <person name="Vranken W."/>
            <person name="Ni F."/>
        </authorList>
    </citation>
    <scope>STRUCTURE BY NMR OF 284-311</scope>
</reference>
<reference key="30">
    <citation type="journal article" date="2008" name="Protein Sci.">
        <title>Structure dissection of human progranulin identifies well-folded granulin/epithelin modules with unique functional activities.</title>
        <authorList>
            <person name="Tolkatchev D."/>
            <person name="Malik S."/>
            <person name="Vinogradova A."/>
            <person name="Wang P."/>
            <person name="Chen Z."/>
            <person name="Xu P."/>
            <person name="Bennett H.P."/>
            <person name="Bateman A."/>
            <person name="Ni F."/>
        </authorList>
    </citation>
    <scope>STRUCTURE BY NMR OF 123-179; 281-337 AND 364-417</scope>
    <scope>DISULFIDE BONDS</scope>
</reference>
<reference key="31">
    <citation type="journal article" date="2006" name="Ann. Neurol.">
        <title>HDDD2 is a familial frontotemporal lobar degeneration with ubiquitin-positive, tau-negative inclusions caused by a missense mutation in the signal peptide of progranulin.</title>
        <authorList>
            <person name="Mukherjee O."/>
            <person name="Pastor P."/>
            <person name="Cairns N.J."/>
            <person name="Chakraverty S."/>
            <person name="Kauwe J.S.K."/>
            <person name="Shears S."/>
            <person name="Behrens M.I."/>
            <person name="Budde J."/>
            <person name="Hinrichs A.L."/>
            <person name="Norton J."/>
            <person name="Levitch D."/>
            <person name="Taylor-Reinwald L."/>
            <person name="Gitcho M."/>
            <person name="Tu P.-H."/>
            <person name="Tenenholz Grinberg L."/>
            <person name="Liscic R.M."/>
            <person name="Armendariz J."/>
            <person name="Morris J.C."/>
            <person name="Goate A.M."/>
        </authorList>
    </citation>
    <scope>VARIANT FTD2 ASP-9</scope>
</reference>
<reference key="32">
    <citation type="journal article" date="2008" name="Hum. Mutat.">
        <title>Molecular characterization of novel progranulin (GRN) mutations in frontotemporal dementia.</title>
        <authorList>
            <person name="Mukherjee O."/>
            <person name="Wang J."/>
            <person name="Gitcho M."/>
            <person name="Chakraverty S."/>
            <person name="Taylor-Reinwald L."/>
            <person name="Shears S."/>
            <person name="Kauwe J.S.K."/>
            <person name="Norton J."/>
            <person name="Levitch D."/>
            <person name="Bigio E.H."/>
            <person name="Hatanpaa K.J."/>
            <person name="White C.L."/>
            <person name="Morris J.C."/>
            <person name="Cairns N.J."/>
            <person name="Goate A."/>
        </authorList>
    </citation>
    <scope>CHARACTERIZATION OF VARIANT FTD2 ASP-9</scope>
</reference>
<reference key="33">
    <citation type="journal article" date="2010" name="Hum. Mutat.">
        <title>A thorough assessment of benign genetic variability in GRN and MAPT.</title>
        <authorList>
            <person name="Guerreiro R.J."/>
            <person name="Washecka N."/>
            <person name="Hardy J."/>
            <person name="Singleton A."/>
        </authorList>
    </citation>
    <scope>VARIANTS TRP-19; TRP-55; THR-69; ASN-119 DEL; TYR-120; MET-182; SER-221; LEU-275; ASN-376; LEU-398; GLN-433; ALA-515 AND HIS-564</scope>
</reference>
<gene>
    <name evidence="31" type="primary">GRN</name>
</gene>
<organism>
    <name type="scientific">Homo sapiens</name>
    <name type="common">Human</name>
    <dbReference type="NCBI Taxonomy" id="9606"/>
    <lineage>
        <taxon>Eukaryota</taxon>
        <taxon>Metazoa</taxon>
        <taxon>Chordata</taxon>
        <taxon>Craniata</taxon>
        <taxon>Vertebrata</taxon>
        <taxon>Euteleostomi</taxon>
        <taxon>Mammalia</taxon>
        <taxon>Eutheria</taxon>
        <taxon>Euarchontoglires</taxon>
        <taxon>Primates</taxon>
        <taxon>Haplorrhini</taxon>
        <taxon>Catarrhini</taxon>
        <taxon>Hominidae</taxon>
        <taxon>Homo</taxon>
    </lineage>
</organism>
<name>GRN_HUMAN</name>
<comment type="function">
    <text evidence="2 4 9 18 19 20">Secreted protein that acts as a key regulator of lysosomal function and as a growth factor involved in inflammation, wound healing and cell proliferation (PubMed:12526812, PubMed:18378771, PubMed:28073925, PubMed:28453791, PubMed:28541286). Regulates protein trafficking to lysosomes, and also the activity of lysosomal enzymes (PubMed:28453791, PubMed:28541286). Also facilitates the acidification of lysosomes, causing degradation of mature CTSD by CTSB (PubMed:28073925). In addition, functions as a wound-related growth factor that acts directly on dermal fibroblasts and endothelial cells to promote division, migration and the formation of capillary-like tubule structures (By similarity). Also promotes epithelial cell proliferation by blocking TNF-mediated neutrophil activation preventing release of oxidants and proteases (PubMed:12526812). Moreover, modulates inflammation in neurons by preserving neurons survival, axonal outgrowth and neuronal integrity (PubMed:18378771).</text>
</comment>
<comment type="function">
    <molecule>Granulin-4</molecule>
    <text>Promotes proliferation of the epithelial cell line A431 in culture.</text>
</comment>
<comment type="function">
    <molecule>Granulin-3</molecule>
    <text evidence="4">Inhibits epithelial cell proliferation and induces epithelial cells to secrete IL-8.</text>
</comment>
<comment type="function">
    <molecule>Granulin-7</molecule>
    <text evidence="19">Stabilizes CTSD through interaction with CTSD leading to maintain its aspartic-type peptidase activity.</text>
</comment>
<comment type="subunit">
    <text evidence="4 13 15 16 17 19 20">Progranulin is secreted as a homodimer (PubMed:23364791). Interacts with SLPI; interaction protects progranulin from proteolysis (PubMed:12526812). Interacts (via region corresponding to granulin-7 peptide) with CTSD; stabilizes CTSD and increases its proteolytic activity (PubMed:28453791). Interacts (via region corresponding to granulin-7 peptide) with SORT1; this interaction mediates endocytosis and lysosome delivery of progranulin; interaction occurs at the neuronal cell surface in a stressed nervous system (PubMed:21092856). Interacts with PSAP; facilitates lysosomal delivery of progranulin from the extracellular space and the biosynthetic pathway (PubMed:26370502). Forms a complex with PSAP and M6PR; PSAP bridges the binding between progranulin and M6PR (PubMed:26370502). Forms a complex with PSAP and SORT1; progranulin bridges the interaction between PSAP and SORT1; facilitates lysosomal targeting of PSAP via SORT1; interaction enhances PSAP uptake in primary cortical neurons (PubMed:28541286). Interacts (via regions corresponding to granulin-2 and granulin-7 peptides) with GBA1; this interaction prevents aggregation of GBA1-SCARB2 complex via interaction with HSPA1A upon stress (PubMed:27789271). Interacts (via region corresponding to granulin-7 peptide) with HSPA1A; mediates recruitment of HSPA1A to GBA1 and prevents GBA1 aggregation in response to stress (PubMed:27789271).</text>
</comment>
<comment type="interaction">
    <interactant intactId="EBI-747754">
        <id>P28799</id>
    </interactant>
    <interactant intactId="EBI-10173507">
        <id>Q6UY14-3</id>
        <label>ADAMTSL4</label>
    </interactant>
    <organismsDiffer>false</organismsDiffer>
    <experiments>3</experiments>
</comment>
<comment type="interaction">
    <interactant intactId="EBI-747754">
        <id>P28799</id>
    </interactant>
    <interactant intactId="EBI-3916527">
        <id>Q9UIJ7</id>
        <label>AK3</label>
    </interactant>
    <organismsDiffer>false</organismsDiffer>
    <experiments>3</experiments>
</comment>
<comment type="interaction">
    <interactant intactId="EBI-747754">
        <id>P28799</id>
    </interactant>
    <interactant intactId="EBI-2130187">
        <id>Q9NYG5</id>
        <label>ANAPC11</label>
    </interactant>
    <organismsDiffer>false</organismsDiffer>
    <experiments>3</experiments>
</comment>
<comment type="interaction">
    <interactant intactId="EBI-747754">
        <id>P28799</id>
    </interactant>
    <interactant intactId="EBI-716933">
        <id>Q8N6T3</id>
        <label>ARFGAP1</label>
    </interactant>
    <organismsDiffer>false</organismsDiffer>
    <experiments>3</experiments>
</comment>
<comment type="interaction">
    <interactant intactId="EBI-747754">
        <id>P28799</id>
    </interactant>
    <interactant intactId="EBI-10694449">
        <id>Q8N6T3-3</id>
        <label>ARFGAP1</label>
    </interactant>
    <organismsDiffer>false</organismsDiffer>
    <experiments>3</experiments>
</comment>
<comment type="interaction">
    <interactant intactId="EBI-747754">
        <id>P28799</id>
    </interactant>
    <interactant intactId="EBI-14199987">
        <id>Q9Y575-3</id>
        <label>ASB3</label>
    </interactant>
    <organismsDiffer>false</organismsDiffer>
    <experiments>3</experiments>
</comment>
<comment type="interaction">
    <interactant intactId="EBI-747754">
        <id>P28799</id>
    </interactant>
    <interactant intactId="EBI-25843552">
        <id>Q96DX5-3</id>
        <label>ASB9</label>
    </interactant>
    <organismsDiffer>false</organismsDiffer>
    <experiments>3</experiments>
</comment>
<comment type="interaction">
    <interactant intactId="EBI-747754">
        <id>P28799</id>
    </interactant>
    <interactant intactId="EBI-10254793">
        <id>Q6XD76</id>
        <label>ASCL4</label>
    </interactant>
    <organismsDiffer>false</organismsDiffer>
    <experiments>3</experiments>
</comment>
<comment type="interaction">
    <interactant intactId="EBI-747754">
        <id>P28799</id>
    </interactant>
    <interactant intactId="EBI-9089489">
        <id>Q96FT7-4</id>
        <label>ASIC4</label>
    </interactant>
    <organismsDiffer>false</organismsDiffer>
    <experiments>3</experiments>
</comment>
<comment type="interaction">
    <interactant intactId="EBI-747754">
        <id>P28799</id>
    </interactant>
    <interactant intactId="EBI-10988864">
        <id>P46379-2</id>
        <label>BAG6</label>
    </interactant>
    <organismsDiffer>false</organismsDiffer>
    <experiments>3</experiments>
</comment>
<comment type="interaction">
    <interactant intactId="EBI-747754">
        <id>P28799</id>
    </interactant>
    <interactant intactId="EBI-519866">
        <id>Q16611</id>
        <label>BAK1</label>
    </interactant>
    <organismsDiffer>false</organismsDiffer>
    <experiments>3</experiments>
</comment>
<comment type="interaction">
    <interactant intactId="EBI-747754">
        <id>P28799</id>
    </interactant>
    <interactant intactId="EBI-4280811">
        <id>Q8IXM2</id>
        <label>BAP18</label>
    </interactant>
    <organismsDiffer>false</organismsDiffer>
    <experiments>3</experiments>
</comment>
<comment type="interaction">
    <interactant intactId="EBI-747754">
        <id>P28799</id>
    </interactant>
    <interactant intactId="EBI-949378">
        <id>Q14457</id>
        <label>BECN1</label>
    </interactant>
    <organismsDiffer>false</organismsDiffer>
    <experiments>3</experiments>
</comment>
<comment type="interaction">
    <interactant intactId="EBI-747754">
        <id>P28799</id>
    </interactant>
    <interactant intactId="EBI-3919268">
        <id>Q96LC9</id>
        <label>BMF</label>
    </interactant>
    <organismsDiffer>false</organismsDiffer>
    <experiments>3</experiments>
</comment>
<comment type="interaction">
    <interactant intactId="EBI-747754">
        <id>P28799</id>
    </interactant>
    <interactant intactId="EBI-25861458">
        <id>Q9GZL8</id>
        <label>BPESC1</label>
    </interactant>
    <organismsDiffer>false</organismsDiffer>
    <experiments>3</experiments>
</comment>
<comment type="interaction">
    <interactant intactId="EBI-747754">
        <id>P28799</id>
    </interactant>
    <interactant intactId="EBI-2837444">
        <id>Q8WUW1</id>
        <label>BRK1</label>
    </interactant>
    <organismsDiffer>false</organismsDiffer>
    <experiments>3</experiments>
</comment>
<comment type="interaction">
    <interactant intactId="EBI-747754">
        <id>P28799</id>
    </interactant>
    <interactant intactId="EBI-307461">
        <id>Q9Y297</id>
        <label>BTRC</label>
    </interactant>
    <organismsDiffer>false</organismsDiffer>
    <experiments>3</experiments>
</comment>
<comment type="interaction">
    <interactant intactId="EBI-747754">
        <id>P28799</id>
    </interactant>
    <interactant intactId="EBI-747505">
        <id>Q8TAB5</id>
        <label>C1orf216</label>
    </interactant>
    <organismsDiffer>false</organismsDiffer>
    <experiments>3</experiments>
</comment>
<comment type="interaction">
    <interactant intactId="EBI-747754">
        <id>P28799</id>
    </interactant>
    <interactant intactId="EBI-7317823">
        <id>Q6P5X5</id>
        <label>C22orf39</label>
    </interactant>
    <organismsDiffer>false</organismsDiffer>
    <experiments>3</experiments>
</comment>
<comment type="interaction">
    <interactant intactId="EBI-747754">
        <id>P28799</id>
    </interactant>
    <interactant intactId="EBI-10692329">
        <id>Q6P5X5-2</id>
        <label>C22orf39</label>
    </interactant>
    <organismsDiffer>false</organismsDiffer>
    <experiments>3</experiments>
</comment>
<comment type="interaction">
    <interactant intactId="EBI-747754">
        <id>P28799</id>
    </interactant>
    <interactant intactId="EBI-715110">
        <id>Q53FE4</id>
        <label>C4orf17</label>
    </interactant>
    <organismsDiffer>false</organismsDiffer>
    <experiments>3</experiments>
</comment>
<comment type="interaction">
    <interactant intactId="EBI-747754">
        <id>P28799</id>
    </interactant>
    <interactant intactId="EBI-751612">
        <id>Q9BRJ6</id>
        <label>C7orf50</label>
    </interactant>
    <organismsDiffer>false</organismsDiffer>
    <experiments>3</experiments>
</comment>
<comment type="interaction">
    <interactant intactId="EBI-747754">
        <id>P28799</id>
    </interactant>
    <interactant intactId="EBI-766279">
        <id>O00555</id>
        <label>CACNA1A</label>
    </interactant>
    <organismsDiffer>false</organismsDiffer>
    <experiments>2</experiments>
</comment>
<comment type="interaction">
    <interactant intactId="EBI-747754">
        <id>P28799</id>
    </interactant>
    <interactant intactId="EBI-3920838">
        <id>Q96NX5</id>
        <label>CAMK1G</label>
    </interactant>
    <organismsDiffer>false</organismsDiffer>
    <experiments>3</experiments>
</comment>
<comment type="interaction">
    <interactant intactId="EBI-747754">
        <id>P28799</id>
    </interactant>
    <interactant intactId="EBI-6149008">
        <id>O75808</id>
        <label>CAPN15</label>
    </interactant>
    <organismsDiffer>false</organismsDiffer>
    <experiments>3</experiments>
</comment>
<comment type="interaction">
    <interactant intactId="EBI-747754">
        <id>P28799</id>
    </interactant>
    <interactant intactId="EBI-740841">
        <id>Q8N5R6</id>
        <label>CCDC33</label>
    </interactant>
    <organismsDiffer>false</organismsDiffer>
    <experiments>3</experiments>
</comment>
<comment type="interaction">
    <interactant intactId="EBI-747754">
        <id>P28799</id>
    </interactant>
    <interactant intactId="EBI-12029902">
        <id>P50750-2</id>
        <label>CDK9</label>
    </interactant>
    <organismsDiffer>false</organismsDiffer>
    <experiments>3</experiments>
</comment>
<comment type="interaction">
    <interactant intactId="EBI-747754">
        <id>P28799</id>
    </interactant>
    <interactant intactId="EBI-10961487">
        <id>O14646-2</id>
        <label>CHD1</label>
    </interactant>
    <organismsDiffer>false</organismsDiffer>
    <experiments>3</experiments>
</comment>
<comment type="interaction">
    <interactant intactId="EBI-747754">
        <id>P28799</id>
    </interactant>
    <interactant intactId="EBI-744045">
        <id>Q9Y3D0</id>
        <label>CIAO2B</label>
    </interactant>
    <organismsDiffer>false</organismsDiffer>
    <experiments>3</experiments>
</comment>
<comment type="interaction">
    <interactant intactId="EBI-747754">
        <id>P28799</id>
    </interactant>
    <interactant intactId="EBI-937732">
        <id>Q99967</id>
        <label>CITED2</label>
    </interactant>
    <organismsDiffer>false</organismsDiffer>
    <experiments>3</experiments>
</comment>
<comment type="interaction">
    <interactant intactId="EBI-747754">
        <id>P28799</id>
    </interactant>
    <interactant intactId="EBI-3957044">
        <id>Q9Y240</id>
        <label>CLEC11A</label>
    </interactant>
    <organismsDiffer>false</organismsDiffer>
    <experiments>3</experiments>
</comment>
<comment type="interaction">
    <interactant intactId="EBI-747754">
        <id>P28799</id>
    </interactant>
    <interactant intactId="EBI-1391211">
        <id>Q9H2X3</id>
        <label>CLEC4M</label>
    </interactant>
    <organismsDiffer>false</organismsDiffer>
    <experiments>2</experiments>
</comment>
<comment type="interaction">
    <interactant intactId="EBI-747754">
        <id>P28799</id>
    </interactant>
    <interactant intactId="EBI-12823145">
        <id>Q96DZ5</id>
        <label>CLIP3</label>
    </interactant>
    <organismsDiffer>false</organismsDiffer>
    <experiments>3</experiments>
</comment>
<comment type="interaction">
    <interactant intactId="EBI-747754">
        <id>P28799</id>
    </interactant>
    <interactant intactId="EBI-1056029">
        <id>Q16740</id>
        <label>CLPP</label>
    </interactant>
    <organismsDiffer>false</organismsDiffer>
    <experiments>3</experiments>
</comment>
<comment type="interaction">
    <interactant intactId="EBI-747754">
        <id>P28799</id>
    </interactant>
    <interactant intactId="EBI-2835965">
        <id>Q9BT09</id>
        <label>CNPY3</label>
    </interactant>
    <organismsDiffer>false</organismsDiffer>
    <experiments>3</experiments>
</comment>
<comment type="interaction">
    <interactant intactId="EBI-747754">
        <id>P28799</id>
    </interactant>
    <interactant intactId="EBI-25836090">
        <id>Q6PJW8-3</id>
        <label>CNST</label>
    </interactant>
    <organismsDiffer>false</organismsDiffer>
    <experiments>3</experiments>
</comment>
<comment type="interaction">
    <interactant intactId="EBI-747754">
        <id>P28799</id>
    </interactant>
    <interactant intactId="EBI-350590">
        <id>Q9UNS2</id>
        <label>COPS3</label>
    </interactant>
    <organismsDiffer>false</organismsDiffer>
    <experiments>3</experiments>
</comment>
<comment type="interaction">
    <interactant intactId="EBI-747754">
        <id>P28799</id>
    </interactant>
    <interactant intactId="EBI-713677">
        <id>Q9UGL9</id>
        <label>CRCT1</label>
    </interactant>
    <organismsDiffer>false</organismsDiffer>
    <experiments>3</experiments>
</comment>
<comment type="interaction">
    <interactant intactId="EBI-747754">
        <id>P28799</id>
    </interactant>
    <interactant intactId="EBI-10192698">
        <id>Q02930-3</id>
        <label>CREB5</label>
    </interactant>
    <organismsDiffer>false</organismsDiffer>
    <experiments>3</experiments>
</comment>
<comment type="interaction">
    <interactant intactId="EBI-747754">
        <id>P28799</id>
    </interactant>
    <interactant intactId="EBI-2212355">
        <id>Q49AN0</id>
        <label>CRY2</label>
    </interactant>
    <organismsDiffer>false</organismsDiffer>
    <experiments>3</experiments>
</comment>
<comment type="interaction">
    <interactant intactId="EBI-747754">
        <id>P28799</id>
    </interactant>
    <interactant intactId="EBI-724303">
        <id>P01040</id>
        <label>CSTA</label>
    </interactant>
    <organismsDiffer>false</organismsDiffer>
    <experiments>3</experiments>
</comment>
<comment type="interaction">
    <interactant intactId="EBI-747754">
        <id>P28799</id>
    </interactant>
    <interactant intactId="EBI-2115097">
        <id>P07339</id>
        <label>CTSD</label>
    </interactant>
    <organismsDiffer>false</organismsDiffer>
    <experiments>4</experiments>
</comment>
<comment type="interaction">
    <interactant intactId="EBI-747754">
        <id>P28799</id>
    </interactant>
    <interactant intactId="EBI-12175919">
        <id>P42830</id>
        <label>CXCL5</label>
    </interactant>
    <organismsDiffer>false</organismsDiffer>
    <experiments>3</experiments>
</comment>
<comment type="interaction">
    <interactant intactId="EBI-747754">
        <id>P28799</id>
    </interactant>
    <interactant intactId="EBI-12024320">
        <id>Q8TB03</id>
        <label>CXorf38</label>
    </interactant>
    <organismsDiffer>false</organismsDiffer>
    <experiments>3</experiments>
</comment>
<comment type="interaction">
    <interactant intactId="EBI-747754">
        <id>P28799</id>
    </interactant>
    <interactant intactId="EBI-1047284">
        <id>P00167</id>
        <label>CYB5A</label>
    </interactant>
    <organismsDiffer>false</organismsDiffer>
    <experiments>3</experiments>
</comment>
<comment type="interaction">
    <interactant intactId="EBI-747754">
        <id>P28799</id>
    </interactant>
    <interactant intactId="EBI-3867333">
        <id>A8MQ03</id>
        <label>CYSRT1</label>
    </interactant>
    <organismsDiffer>false</organismsDiffer>
    <experiments>3</experiments>
</comment>
<comment type="interaction">
    <interactant intactId="EBI-747754">
        <id>P28799</id>
    </interactant>
    <interactant intactId="EBI-351394">
        <id>Q16643</id>
        <label>DBN1</label>
    </interactant>
    <organismsDiffer>false</organismsDiffer>
    <experiments>5</experiments>
</comment>
<comment type="interaction">
    <interactant intactId="EBI-747754">
        <id>P28799</id>
    </interactant>
    <interactant intactId="EBI-25842815">
        <id>Q5TAQ9-2</id>
        <label>DCAF8</label>
    </interactant>
    <organismsDiffer>false</organismsDiffer>
    <experiments>3</experiments>
</comment>
<comment type="interaction">
    <interactant intactId="EBI-747754">
        <id>P28799</id>
    </interactant>
    <interactant intactId="EBI-12019838">
        <id>Q9P1A6-3</id>
        <label>DLGAP2</label>
    </interactant>
    <organismsDiffer>false</organismsDiffer>
    <experiments>3</experiments>
</comment>
<comment type="interaction">
    <interactant intactId="EBI-747754">
        <id>P28799</id>
    </interactant>
    <interactant intactId="EBI-3908234">
        <id>Q07687</id>
        <label>DLX2</label>
    </interactant>
    <organismsDiffer>false</organismsDiffer>
    <experiments>3</experiments>
</comment>
<comment type="interaction">
    <interactant intactId="EBI-747754">
        <id>P28799</id>
    </interactant>
    <interactant intactId="EBI-9679045">
        <id>Q9NQL9</id>
        <label>DMRT3</label>
    </interactant>
    <organismsDiffer>false</organismsDiffer>
    <experiments>3</experiments>
</comment>
<comment type="interaction">
    <interactant intactId="EBI-747754">
        <id>P28799</id>
    </interactant>
    <interactant intactId="EBI-20894690">
        <id>P49184</id>
        <label>DNASE1L1</label>
    </interactant>
    <organismsDiffer>false</organismsDiffer>
    <experiments>3</experiments>
</comment>
<comment type="interaction">
    <interactant intactId="EBI-747754">
        <id>P28799</id>
    </interactant>
    <interactant intactId="EBI-947964">
        <id>Q16610</id>
        <label>ECM1</label>
    </interactant>
    <organismsDiffer>false</organismsDiffer>
    <experiments>3</experiments>
</comment>
<comment type="interaction">
    <interactant intactId="EBI-747754">
        <id>P28799</id>
    </interactant>
    <interactant intactId="EBI-11132357">
        <id>O75530-2</id>
        <label>EED</label>
    </interactant>
    <organismsDiffer>false</organismsDiffer>
    <experiments>3</experiments>
</comment>
<comment type="interaction">
    <interactant intactId="EBI-747754">
        <id>P28799</id>
    </interactant>
    <interactant intactId="EBI-928530">
        <id>O60841</id>
        <label>EIF5B</label>
    </interactant>
    <organismsDiffer>false</organismsDiffer>
    <experiments>3</experiments>
</comment>
<comment type="interaction">
    <interactant intactId="EBI-747754">
        <id>P28799</id>
    </interactant>
    <interactant intactId="EBI-12920100">
        <id>Q6UXG2-3</id>
        <label>ELAPOR1</label>
    </interactant>
    <organismsDiffer>false</organismsDiffer>
    <experiments>3</experiments>
</comment>
<comment type="interaction">
    <interactant intactId="EBI-747754">
        <id>P28799</id>
    </interactant>
    <interactant intactId="EBI-21574901">
        <id>Q8TE68-3</id>
        <label>EPS8L1</label>
    </interactant>
    <organismsDiffer>false</organismsDiffer>
    <experiments>3</experiments>
</comment>
<comment type="interaction">
    <interactant intactId="EBI-747754">
        <id>P28799</id>
    </interactant>
    <interactant intactId="EBI-3940939">
        <id>Q9H6S3</id>
        <label>EPS8L2</label>
    </interactant>
    <organismsDiffer>false</organismsDiffer>
    <experiments>3</experiments>
</comment>
<comment type="interaction">
    <interactant intactId="EBI-747754">
        <id>P28799</id>
    </interactant>
    <interactant intactId="EBI-10697159">
        <id>O15540</id>
        <label>FABP7</label>
    </interactant>
    <organismsDiffer>false</organismsDiffer>
    <experiments>3</experiments>
</comment>
<comment type="interaction">
    <interactant intactId="EBI-747754">
        <id>P28799</id>
    </interactant>
    <interactant intactId="EBI-718246">
        <id>Q9UNN5</id>
        <label>FAF1</label>
    </interactant>
    <organismsDiffer>false</organismsDiffer>
    <experiments>3</experiments>
</comment>
<comment type="interaction">
    <interactant intactId="EBI-747754">
        <id>P28799</id>
    </interactant>
    <interactant intactId="EBI-6309082">
        <id>Q6SJ93</id>
        <label>FAM111B</label>
    </interactant>
    <organismsDiffer>false</organismsDiffer>
    <experiments>3</experiments>
</comment>
<comment type="interaction">
    <interactant intactId="EBI-747754">
        <id>P28799</id>
    </interactant>
    <interactant intactId="EBI-741921">
        <id>Q96AQ9</id>
        <label>FAM131C</label>
    </interactant>
    <organismsDiffer>false</organismsDiffer>
    <experiments>4</experiments>
</comment>
<comment type="interaction">
    <interactant intactId="EBI-747754">
        <id>P28799</id>
    </interactant>
    <interactant intactId="EBI-11956087">
        <id>Q5HYJ3-3</id>
        <label>FAM76B</label>
    </interactant>
    <organismsDiffer>false</organismsDiffer>
    <experiments>6</experiments>
</comment>
<comment type="interaction">
    <interactant intactId="EBI-747754">
        <id>P28799</id>
    </interactant>
    <interactant intactId="EBI-5461838">
        <id>Q17RN3</id>
        <label>FAM98C</label>
    </interactant>
    <organismsDiffer>false</organismsDiffer>
    <experiments>3</experiments>
</comment>
<comment type="interaction">
    <interactant intactId="EBI-747754">
        <id>P28799</id>
    </interactant>
    <interactant intactId="EBI-8468186">
        <id>Q8IZU1</id>
        <label>FAM9A</label>
    </interactant>
    <organismsDiffer>false</organismsDiffer>
    <experiments>3</experiments>
</comment>
<comment type="interaction">
    <interactant intactId="EBI-747754">
        <id>P28799</id>
    </interactant>
    <interactant intactId="EBI-2339898">
        <id>Q9NW38</id>
        <label>FANCL</label>
    </interactant>
    <organismsDiffer>false</organismsDiffer>
    <experiments>3</experiments>
</comment>
<comment type="interaction">
    <interactant intactId="EBI-747754">
        <id>P28799</id>
    </interactant>
    <interactant intactId="EBI-3957005">
        <id>Q53R41</id>
        <label>FASTKD1</label>
    </interactant>
    <organismsDiffer>false</organismsDiffer>
    <experiments>3</experiments>
</comment>
<comment type="interaction">
    <interactant intactId="EBI-747754">
        <id>P28799</id>
    </interactant>
    <interactant intactId="EBI-724767">
        <id>Q8NFZ0</id>
        <label>FBH1</label>
    </interactant>
    <organismsDiffer>false</organismsDiffer>
    <experiments>3</experiments>
</comment>
<comment type="interaction">
    <interactant intactId="EBI-747754">
        <id>P28799</id>
    </interactant>
    <interactant intactId="EBI-947897">
        <id>Q9UBX5</id>
        <label>FBLN5</label>
    </interactant>
    <organismsDiffer>false</organismsDiffer>
    <experiments>3</experiments>
</comment>
<comment type="interaction">
    <interactant intactId="EBI-747754">
        <id>P28799</id>
    </interactant>
    <interactant intactId="EBI-9090198">
        <id>P15976-2</id>
        <label>GATA1</label>
    </interactant>
    <organismsDiffer>false</organismsDiffer>
    <experiments>3</experiments>
</comment>
<comment type="interaction">
    <interactant intactId="EBI-747754">
        <id>P28799</id>
    </interactant>
    <interactant intactId="EBI-21856389">
        <id>P23769-2</id>
        <label>GATA2</label>
    </interactant>
    <organismsDiffer>false</organismsDiffer>
    <experiments>3</experiments>
</comment>
<comment type="interaction">
    <interactant intactId="EBI-747754">
        <id>P28799</id>
    </interactant>
    <interactant intactId="EBI-8799578">
        <id>Q9NXC2</id>
        <label>GFOD1</label>
    </interactant>
    <organismsDiffer>false</organismsDiffer>
    <experiments>3</experiments>
</comment>
<comment type="interaction">
    <interactant intactId="EBI-747754">
        <id>P28799</id>
    </interactant>
    <interactant intactId="EBI-14061927">
        <id>P10075</id>
        <label>GLI4</label>
    </interactant>
    <organismsDiffer>false</organismsDiffer>
    <experiments>3</experiments>
</comment>
<comment type="interaction">
    <interactant intactId="EBI-747754">
        <id>P28799</id>
    </interactant>
    <interactant intactId="EBI-374781">
        <id>O76003</id>
        <label>GLRX3</label>
    </interactant>
    <organismsDiffer>false</organismsDiffer>
    <experiments>9</experiments>
</comment>
<comment type="interaction">
    <interactant intactId="EBI-747754">
        <id>P28799</id>
    </interactant>
    <interactant intactId="EBI-11975289">
        <id>Q9Y223-2</id>
        <label>GNE</label>
    </interactant>
    <organismsDiffer>false</organismsDiffer>
    <experiments>6</experiments>
</comment>
<comment type="interaction">
    <interactant intactId="EBI-747754">
        <id>P28799</id>
    </interactant>
    <interactant intactId="EBI-22000587">
        <id>Q9HBQ8</id>
        <label>GOLGA2P5</label>
    </interactant>
    <organismsDiffer>false</organismsDiffer>
    <experiments>3</experiments>
</comment>
<comment type="interaction">
    <interactant intactId="EBI-747754">
        <id>P28799</id>
    </interactant>
    <interactant intactId="EBI-21649723">
        <id>Q7Z602</id>
        <label>GPR141</label>
    </interactant>
    <organismsDiffer>false</organismsDiffer>
    <experiments>3</experiments>
</comment>
<comment type="interaction">
    <interactant intactId="EBI-747754">
        <id>P28799</id>
    </interactant>
    <interactant intactId="EBI-347538">
        <id>Q9Y4H4</id>
        <label>GPSM3</label>
    </interactant>
    <organismsDiffer>false</organismsDiffer>
    <experiments>3</experiments>
</comment>
<comment type="interaction">
    <interactant intactId="EBI-747754">
        <id>P28799</id>
    </interactant>
    <interactant intactId="EBI-6447217">
        <id>O75409</id>
        <label>H2AP</label>
    </interactant>
    <organismsDiffer>false</organismsDiffer>
    <experiments>3</experiments>
</comment>
<comment type="interaction">
    <interactant intactId="EBI-747754">
        <id>P28799</id>
    </interactant>
    <interactant intactId="EBI-2868501">
        <id>Q6NXT2</id>
        <label>H3-5</label>
    </interactant>
    <organismsDiffer>false</organismsDiffer>
    <experiments>3</experiments>
</comment>
<comment type="interaction">
    <interactant intactId="EBI-747754">
        <id>P28799</id>
    </interactant>
    <interactant intactId="EBI-79722">
        <id>P68431</id>
        <label>H3C12</label>
    </interactant>
    <organismsDiffer>false</organismsDiffer>
    <experiments>3</experiments>
</comment>
<comment type="interaction">
    <interactant intactId="EBI-747754">
        <id>P28799</id>
    </interactant>
    <interactant intactId="EBI-25843825">
        <id>A8K0U2</id>
        <label>hCG_2001421</label>
    </interactant>
    <organismsDiffer>false</organismsDiffer>
    <experiments>3</experiments>
</comment>
<comment type="interaction">
    <interactant intactId="EBI-747754">
        <id>P28799</id>
    </interactant>
    <interactant intactId="EBI-747421">
        <id>Q03014</id>
        <label>HHEX</label>
    </interactant>
    <organismsDiffer>false</organismsDiffer>
    <experiments>3</experiments>
</comment>
<comment type="interaction">
    <interactant intactId="EBI-747754">
        <id>P28799</id>
    </interactant>
    <interactant intactId="EBI-740785">
        <id>P49639</id>
        <label>HOXA1</label>
    </interactant>
    <organismsDiffer>false</organismsDiffer>
    <experiments>18</experiments>
</comment>
<comment type="interaction">
    <interactant intactId="EBI-747754">
        <id>P28799</id>
    </interactant>
    <interactant intactId="EBI-3923226">
        <id>P09017</id>
        <label>HOXC4</label>
    </interactant>
    <organismsDiffer>false</organismsDiffer>
    <experiments>3</experiments>
</comment>
<comment type="interaction">
    <interactant intactId="EBI-747754">
        <id>P28799</id>
    </interactant>
    <interactant intactId="EBI-2831948">
        <id>P22692</id>
        <label>IGFBP4</label>
    </interactant>
    <organismsDiffer>false</organismsDiffer>
    <experiments>3</experiments>
</comment>
<comment type="interaction">
    <interactant intactId="EBI-747754">
        <id>P28799</id>
    </interactant>
    <interactant intactId="EBI-17178971">
        <id>Q14005-2</id>
        <label>IL16</label>
    </interactant>
    <organismsDiffer>false</organismsDiffer>
    <experiments>3</experiments>
</comment>
<comment type="interaction">
    <interactant intactId="EBI-747754">
        <id>P28799</id>
    </interactant>
    <interactant intactId="EBI-743980">
        <id>Q9NXX0</id>
        <label>ILF3</label>
    </interactant>
    <organismsDiffer>false</organismsDiffer>
    <experiments>3</experiments>
</comment>
<comment type="interaction">
    <interactant intactId="EBI-747754">
        <id>P28799</id>
    </interactant>
    <interactant intactId="EBI-2866661">
        <id>Q9UNL4</id>
        <label>ING4</label>
    </interactant>
    <organismsDiffer>false</organismsDiffer>
    <experiments>3</experiments>
</comment>
<comment type="interaction">
    <interactant intactId="EBI-747754">
        <id>P28799</id>
    </interactant>
    <interactant intactId="EBI-10238842">
        <id>Q8IXL9</id>
        <label>IQCF2</label>
    </interactant>
    <organismsDiffer>false</organismsDiffer>
    <experiments>3</experiments>
</comment>
<comment type="interaction">
    <interactant intactId="EBI-747754">
        <id>P28799</id>
    </interactant>
    <interactant intactId="EBI-25840037">
        <id>Q9Y6F6-3</id>
        <label>IRAG1</label>
    </interactant>
    <organismsDiffer>false</organismsDiffer>
    <experiments>3</experiments>
</comment>
<comment type="interaction">
    <interactant intactId="EBI-747754">
        <id>P28799</id>
    </interactant>
    <interactant intactId="EBI-10258659">
        <id>Q86U28</id>
        <label>ISCA2</label>
    </interactant>
    <organismsDiffer>false</organismsDiffer>
    <experiments>3</experiments>
</comment>
<comment type="interaction">
    <interactant intactId="EBI-747754">
        <id>P28799</id>
    </interactant>
    <interactant intactId="EBI-751001">
        <id>Q14145</id>
        <label>KEAP1</label>
    </interactant>
    <organismsDiffer>false</organismsDiffer>
    <experiments>3</experiments>
</comment>
<comment type="interaction">
    <interactant intactId="EBI-747754">
        <id>P28799</id>
    </interactant>
    <interactant intactId="EBI-2679809">
        <id>Q12756</id>
        <label>KIF1A</label>
    </interactant>
    <organismsDiffer>false</organismsDiffer>
    <experiments>3</experiments>
</comment>
<comment type="interaction">
    <interactant intactId="EBI-747754">
        <id>P28799</id>
    </interactant>
    <interactant intactId="EBI-2796400">
        <id>Q9UIH9</id>
        <label>KLF15</label>
    </interactant>
    <organismsDiffer>false</organismsDiffer>
    <experiments>3</experiments>
</comment>
<comment type="interaction">
    <interactant intactId="EBI-747754">
        <id>P28799</id>
    </interactant>
    <interactant intactId="EBI-8472267">
        <id>P57682</id>
        <label>KLF3</label>
    </interactant>
    <organismsDiffer>false</organismsDiffer>
    <experiments>4</experiments>
</comment>
<comment type="interaction">
    <interactant intactId="EBI-747754">
        <id>P28799</id>
    </interactant>
    <interactant intactId="EBI-714379">
        <id>Q9Y2M5</id>
        <label>KLHL20</label>
    </interactant>
    <organismsDiffer>false</organismsDiffer>
    <experiments>3</experiments>
</comment>
<comment type="interaction">
    <interactant intactId="EBI-747754">
        <id>P28799</id>
    </interactant>
    <interactant intactId="EBI-1047093">
        <id>O76011</id>
        <label>KRT34</label>
    </interactant>
    <organismsDiffer>false</organismsDiffer>
    <experiments>3</experiments>
</comment>
<comment type="interaction">
    <interactant intactId="EBI-747754">
        <id>P28799</id>
    </interactant>
    <interactant intactId="EBI-11959885">
        <id>Q07627</id>
        <label>KRTAP1-1</label>
    </interactant>
    <organismsDiffer>false</organismsDiffer>
    <experiments>3</experiments>
</comment>
<comment type="interaction">
    <interactant intactId="EBI-747754">
        <id>P28799</id>
    </interactant>
    <interactant intactId="EBI-11741292">
        <id>Q9BYS1</id>
        <label>KRTAP1-5</label>
    </interactant>
    <organismsDiffer>false</organismsDiffer>
    <experiments>3</experiments>
</comment>
<comment type="interaction">
    <interactant intactId="EBI-747754">
        <id>P28799</id>
    </interactant>
    <interactant intactId="EBI-10172290">
        <id>P60409</id>
        <label>KRTAP10-7</label>
    </interactant>
    <organismsDiffer>false</organismsDiffer>
    <experiments>3</experiments>
</comment>
<comment type="interaction">
    <interactant intactId="EBI-747754">
        <id>P28799</id>
    </interactant>
    <interactant intactId="EBI-10171774">
        <id>P60410</id>
        <label>KRTAP10-8</label>
    </interactant>
    <organismsDiffer>false</organismsDiffer>
    <experiments>3</experiments>
</comment>
<comment type="interaction">
    <interactant intactId="EBI-747754">
        <id>P28799</id>
    </interactant>
    <interactant intactId="EBI-1052037">
        <id>Q8IUC1</id>
        <label>KRTAP11-1</label>
    </interactant>
    <organismsDiffer>false</organismsDiffer>
    <experiments>3</experiments>
</comment>
<comment type="interaction">
    <interactant intactId="EBI-747754">
        <id>P28799</id>
    </interactant>
    <interactant intactId="EBI-10210845">
        <id>P59990</id>
        <label>KRTAP12-1</label>
    </interactant>
    <organismsDiffer>false</organismsDiffer>
    <experiments>3</experiments>
</comment>
<comment type="interaction">
    <interactant intactId="EBI-747754">
        <id>P28799</id>
    </interactant>
    <interactant intactId="EBI-11953846">
        <id>Q52LG2</id>
        <label>KRTAP13-2</label>
    </interactant>
    <organismsDiffer>false</organismsDiffer>
    <experiments>3</experiments>
</comment>
<comment type="interaction">
    <interactant intactId="EBI-747754">
        <id>P28799</id>
    </interactant>
    <interactant intactId="EBI-10241252">
        <id>Q3SY46</id>
        <label>KRTAP13-3</label>
    </interactant>
    <organismsDiffer>false</organismsDiffer>
    <experiments>3</experiments>
</comment>
<comment type="interaction">
    <interactant intactId="EBI-747754">
        <id>P28799</id>
    </interactant>
    <interactant intactId="EBI-11992140">
        <id>Q3LI76</id>
        <label>KRTAP15-1</label>
    </interactant>
    <organismsDiffer>false</organismsDiffer>
    <experiments>3</experiments>
</comment>
<comment type="interaction">
    <interactant intactId="EBI-747754">
        <id>P28799</id>
    </interactant>
    <interactant intactId="EBI-10241353">
        <id>Q3SYF9</id>
        <label>KRTAP19-7</label>
    </interactant>
    <organismsDiffer>false</organismsDiffer>
    <experiments>3</experiments>
</comment>
<comment type="interaction">
    <interactant intactId="EBI-747754">
        <id>P28799</id>
    </interactant>
    <interactant intactId="EBI-3957672">
        <id>Q6PEX3</id>
        <label>KRTAP26-1</label>
    </interactant>
    <organismsDiffer>false</organismsDiffer>
    <experiments>8</experiments>
</comment>
<comment type="interaction">
    <interactant intactId="EBI-747754">
        <id>P28799</id>
    </interactant>
    <interactant intactId="EBI-3958099">
        <id>P26371</id>
        <label>KRTAP5-9</label>
    </interactant>
    <organismsDiffer>false</organismsDiffer>
    <experiments>3</experiments>
</comment>
<comment type="interaction">
    <interactant intactId="EBI-747754">
        <id>P28799</id>
    </interactant>
    <interactant intactId="EBI-12111050">
        <id>Q3LI64</id>
        <label>KRTAP6-1</label>
    </interactant>
    <organismsDiffer>false</organismsDiffer>
    <experiments>3</experiments>
</comment>
<comment type="interaction">
    <interactant intactId="EBI-747754">
        <id>P28799</id>
    </interactant>
    <interactant intactId="EBI-11962084">
        <id>Q3LI66</id>
        <label>KRTAP6-2</label>
    </interactant>
    <organismsDiffer>false</organismsDiffer>
    <experiments>3</experiments>
</comment>
<comment type="interaction">
    <interactant intactId="EBI-747754">
        <id>P28799</id>
    </interactant>
    <interactant intactId="EBI-10261141">
        <id>Q8IUC2</id>
        <label>KRTAP8-1</label>
    </interactant>
    <organismsDiffer>false</organismsDiffer>
    <experiments>3</experiments>
</comment>
<comment type="interaction">
    <interactant intactId="EBI-747754">
        <id>P28799</id>
    </interactant>
    <interactant intactId="EBI-9088686">
        <id>Q14847-2</id>
        <label>LASP1</label>
    </interactant>
    <organismsDiffer>false</organismsDiffer>
    <experiments>3</experiments>
</comment>
<comment type="interaction">
    <interactant intactId="EBI-747754">
        <id>P28799</id>
    </interactant>
    <interactant intactId="EBI-8473670">
        <id>O95447</id>
        <label>LCA5L</label>
    </interactant>
    <organismsDiffer>false</organismsDiffer>
    <experiments>3</experiments>
</comment>
<comment type="interaction">
    <interactant intactId="EBI-747754">
        <id>P28799</id>
    </interactant>
    <interactant intactId="EBI-11962058">
        <id>Q5T7P2</id>
        <label>LCE1A</label>
    </interactant>
    <organismsDiffer>false</organismsDiffer>
    <experiments>3</experiments>
</comment>
<comment type="interaction">
    <interactant intactId="EBI-747754">
        <id>P28799</id>
    </interactant>
    <interactant intactId="EBI-10245913">
        <id>Q5T7P3</id>
        <label>LCE1B</label>
    </interactant>
    <organismsDiffer>false</organismsDiffer>
    <experiments>3</experiments>
</comment>
<comment type="interaction">
    <interactant intactId="EBI-747754">
        <id>P28799</id>
    </interactant>
    <interactant intactId="EBI-11741311">
        <id>Q5T752</id>
        <label>LCE1D</label>
    </interactant>
    <organismsDiffer>false</organismsDiffer>
    <experiments>3</experiments>
</comment>
<comment type="interaction">
    <interactant intactId="EBI-747754">
        <id>P28799</id>
    </interactant>
    <interactant intactId="EBI-11955335">
        <id>Q5T753</id>
        <label>LCE1E</label>
    </interactant>
    <organismsDiffer>false</organismsDiffer>
    <experiments>3</experiments>
</comment>
<comment type="interaction">
    <interactant intactId="EBI-747754">
        <id>P28799</id>
    </interactant>
    <interactant intactId="EBI-10246607">
        <id>Q5TA79</id>
        <label>LCE2A</label>
    </interactant>
    <organismsDiffer>false</organismsDiffer>
    <experiments>3</experiments>
</comment>
<comment type="interaction">
    <interactant intactId="EBI-747754">
        <id>P28799</id>
    </interactant>
    <interactant intactId="EBI-11478468">
        <id>O14633</id>
        <label>LCE2B</label>
    </interactant>
    <organismsDiffer>false</organismsDiffer>
    <experiments>3</experiments>
</comment>
<comment type="interaction">
    <interactant intactId="EBI-747754">
        <id>P28799</id>
    </interactant>
    <interactant intactId="EBI-10246750">
        <id>Q5TA82</id>
        <label>LCE2D</label>
    </interactant>
    <organismsDiffer>false</organismsDiffer>
    <experiments>3</experiments>
</comment>
<comment type="interaction">
    <interactant intactId="EBI-747754">
        <id>P28799</id>
    </interactant>
    <interactant intactId="EBI-10245291">
        <id>Q5T5A8</id>
        <label>LCE3C</label>
    </interactant>
    <organismsDiffer>false</organismsDiffer>
    <experiments>3</experiments>
</comment>
<comment type="interaction">
    <interactant intactId="EBI-747754">
        <id>P28799</id>
    </interactant>
    <interactant intactId="EBI-10245456">
        <id>Q5T5B0</id>
        <label>LCE3E</label>
    </interactant>
    <organismsDiffer>false</organismsDiffer>
    <experiments>3</experiments>
</comment>
<comment type="interaction">
    <interactant intactId="EBI-747754">
        <id>P28799</id>
    </interactant>
    <interactant intactId="EBI-10246358">
        <id>Q5TA78</id>
        <label>LCE4A</label>
    </interactant>
    <organismsDiffer>false</organismsDiffer>
    <experiments>4</experiments>
</comment>
<comment type="interaction">
    <interactant intactId="EBI-747754">
        <id>P28799</id>
    </interactant>
    <interactant intactId="EBI-10258746">
        <id>Q9UPM6</id>
        <label>LHX6</label>
    </interactant>
    <organismsDiffer>false</organismsDiffer>
    <experiments>3</experiments>
</comment>
<comment type="interaction">
    <interactant intactId="EBI-747754">
        <id>P28799</id>
    </interactant>
    <interactant intactId="EBI-8474075">
        <id>Q68G74</id>
        <label>LHX8</label>
    </interactant>
    <organismsDiffer>false</organismsDiffer>
    <experiments>3</experiments>
</comment>
<comment type="interaction">
    <interactant intactId="EBI-747754">
        <id>P28799</id>
    </interactant>
    <interactant intactId="EBI-9088215">
        <id>A2RU56</id>
        <label>LOC401296</label>
    </interactant>
    <organismsDiffer>false</organismsDiffer>
    <experiments>3</experiments>
</comment>
<comment type="interaction">
    <interactant intactId="EBI-747754">
        <id>P28799</id>
    </interactant>
    <interactant intactId="EBI-749562">
        <id>Q96JB6</id>
        <label>LOXL4</label>
    </interactant>
    <organismsDiffer>false</organismsDiffer>
    <experiments>3</experiments>
</comment>
<comment type="interaction">
    <interactant intactId="EBI-747754">
        <id>P28799</id>
    </interactant>
    <interactant intactId="EBI-5278370">
        <id>Q14693</id>
        <label>LPIN1</label>
    </interactant>
    <organismsDiffer>false</organismsDiffer>
    <experiments>3</experiments>
</comment>
<comment type="interaction">
    <interactant intactId="EBI-747754">
        <id>P28799</id>
    </interactant>
    <interactant intactId="EBI-25862057">
        <id>Q6Q4G3-4</id>
        <label>LVRN</label>
    </interactant>
    <organismsDiffer>false</organismsDiffer>
    <experiments>3</experiments>
</comment>
<comment type="interaction">
    <interactant intactId="EBI-747754">
        <id>P28799</id>
    </interactant>
    <interactant intactId="EBI-12056869">
        <id>Q9UDY8-2</id>
        <label>MALT1</label>
    </interactant>
    <organismsDiffer>false</organismsDiffer>
    <experiments>3</experiments>
</comment>
<comment type="interaction">
    <interactant intactId="EBI-747754">
        <id>P28799</id>
    </interactant>
    <interactant intactId="EBI-373144">
        <id>Q9GZQ8</id>
        <label>MAP1LC3B</label>
    </interactant>
    <organismsDiffer>false</organismsDiffer>
    <experiments>3</experiments>
</comment>
<comment type="interaction">
    <interactant intactId="EBI-747754">
        <id>P28799</id>
    </interactant>
    <interactant intactId="EBI-476263">
        <id>Q99683</id>
        <label>MAP3K5</label>
    </interactant>
    <organismsDiffer>false</organismsDiffer>
    <experiments>3</experiments>
</comment>
<comment type="interaction">
    <interactant intactId="EBI-747754">
        <id>P28799</id>
    </interactant>
    <interactant intactId="EBI-25848049">
        <id>P61244-4</id>
        <label>MAX</label>
    </interactant>
    <organismsDiffer>false</organismsDiffer>
    <experiments>3</experiments>
</comment>
<comment type="interaction">
    <interactant intactId="EBI-747754">
        <id>P28799</id>
    </interactant>
    <interactant intactId="EBI-6448717">
        <id>O95243-2</id>
        <label>MBD4</label>
    </interactant>
    <organismsDiffer>false</organismsDiffer>
    <experiments>3</experiments>
</comment>
<comment type="interaction">
    <interactant intactId="EBI-747754">
        <id>P28799</id>
    </interactant>
    <interactant intactId="EBI-16439278">
        <id>Q6FHY5</id>
        <label>MEOX2</label>
    </interactant>
    <organismsDiffer>false</organismsDiffer>
    <experiments>3</experiments>
</comment>
<comment type="interaction">
    <interactant intactId="EBI-747754">
        <id>P28799</id>
    </interactant>
    <interactant intactId="EBI-2829677">
        <id>P41218</id>
        <label>MNDA</label>
    </interactant>
    <organismsDiffer>false</organismsDiffer>
    <experiments>3</experiments>
</comment>
<comment type="interaction">
    <interactant intactId="EBI-747754">
        <id>P28799</id>
    </interactant>
    <interactant intactId="EBI-25840143">
        <id>Q86VF5-3</id>
        <label>MOGAT3</label>
    </interactant>
    <organismsDiffer>false</organismsDiffer>
    <experiments>3</experiments>
</comment>
<comment type="interaction">
    <interactant intactId="EBI-747754">
        <id>P28799</id>
    </interactant>
    <interactant intactId="EBI-1046443">
        <id>Q9Y2R5</id>
        <label>MRPS17</label>
    </interactant>
    <organismsDiffer>false</organismsDiffer>
    <experiments>3</experiments>
</comment>
<comment type="interaction">
    <interactant intactId="EBI-747754">
        <id>P28799</id>
    </interactant>
    <interactant intactId="EBI-25860238">
        <id>O43196-4</id>
        <label>MSH5</label>
    </interactant>
    <organismsDiffer>false</organismsDiffer>
    <experiments>3</experiments>
</comment>
<comment type="interaction">
    <interactant intactId="EBI-747754">
        <id>P28799</id>
    </interactant>
    <interactant intactId="EBI-10699187">
        <id>Q8IXL7-2</id>
        <label>MSRB3</label>
    </interactant>
    <organismsDiffer>false</organismsDiffer>
    <experiments>3</experiments>
</comment>
<comment type="interaction">
    <interactant intactId="EBI-747754">
        <id>P28799</id>
    </interactant>
    <interactant intactId="EBI-1390771">
        <id>Q96A32</id>
        <label>MYL11</label>
    </interactant>
    <organismsDiffer>false</organismsDiffer>
    <experiments>3</experiments>
</comment>
<comment type="interaction">
    <interactant intactId="EBI-747754">
        <id>P28799</id>
    </interactant>
    <interactant intactId="EBI-3446748">
        <id>Q9NPC7</id>
        <label>MYNN</label>
    </interactant>
    <organismsDiffer>false</organismsDiffer>
    <experiments>3</experiments>
</comment>
<comment type="interaction">
    <interactant intactId="EBI-747754">
        <id>P28799</id>
    </interactant>
    <interactant intactId="EBI-7108375">
        <id>O15069</id>
        <label>NACAD</label>
    </interactant>
    <organismsDiffer>false</organismsDiffer>
    <experiments>3</experiments>
</comment>
<comment type="interaction">
    <interactant intactId="EBI-747754">
        <id>P28799</id>
    </interactant>
    <interactant intactId="EBI-718177">
        <id>Q99608</id>
        <label>NDN</label>
    </interactant>
    <organismsDiffer>false</organismsDiffer>
    <experiments>3</experiments>
</comment>
<comment type="interaction">
    <interactant intactId="EBI-747754">
        <id>P28799</id>
    </interactant>
    <interactant intactId="EBI-2606839">
        <id>Q9P032</id>
        <label>NDUFAF4</label>
    </interactant>
    <organismsDiffer>false</organismsDiffer>
    <experiments>3</experiments>
</comment>
<comment type="interaction">
    <interactant intactId="EBI-747754">
        <id>P28799</id>
    </interactant>
    <interactant intactId="EBI-2130062">
        <id>Q12986</id>
        <label>NFX1</label>
    </interactant>
    <organismsDiffer>false</organismsDiffer>
    <experiments>3</experiments>
</comment>
<comment type="interaction">
    <interactant intactId="EBI-747754">
        <id>P28799</id>
    </interactant>
    <interactant intactId="EBI-718372">
        <id>Q8N5V2</id>
        <label>NGEF</label>
    </interactant>
    <organismsDiffer>false</organismsDiffer>
    <experiments>3</experiments>
</comment>
<comment type="interaction">
    <interactant intactId="EBI-747754">
        <id>P28799</id>
    </interactant>
    <interactant intactId="EBI-366978">
        <id>Q9UBE8</id>
        <label>NLK</label>
    </interactant>
    <organismsDiffer>false</organismsDiffer>
    <experiments>7</experiments>
</comment>
<comment type="interaction">
    <interactant intactId="EBI-747754">
        <id>P28799</id>
    </interactant>
    <interactant intactId="EBI-25860999">
        <id>Q96AM0</id>
        <label>NLRP1</label>
    </interactant>
    <organismsDiffer>false</organismsDiffer>
    <experiments>3</experiments>
</comment>
<comment type="interaction">
    <interactant intactId="EBI-747754">
        <id>P28799</id>
    </interactant>
    <interactant intactId="EBI-25860267">
        <id>Q6IAD4</id>
        <label>NOTCH1</label>
    </interactant>
    <organismsDiffer>false</organismsDiffer>
    <experiments>3</experiments>
</comment>
<comment type="interaction">
    <interactant intactId="EBI-747754">
        <id>P28799</id>
    </interactant>
    <interactant intactId="EBI-6144053">
        <id>Q14995</id>
        <label>NR1D2</label>
    </interactant>
    <organismsDiffer>false</organismsDiffer>
    <experiments>3</experiments>
</comment>
<comment type="interaction">
    <interactant intactId="EBI-747754">
        <id>P28799</id>
    </interactant>
    <interactant intactId="EBI-1210753">
        <id>Q7Z417</id>
        <label>NUFIP2</label>
    </interactant>
    <organismsDiffer>false</organismsDiffer>
    <experiments>10</experiments>
</comment>
<comment type="interaction">
    <interactant intactId="EBI-747754">
        <id>P28799</id>
    </interactant>
    <interactant intactId="EBI-536879">
        <id>O43482</id>
        <label>OIP5</label>
    </interactant>
    <organismsDiffer>false</organismsDiffer>
    <experiments>3</experiments>
</comment>
<comment type="interaction">
    <interactant intactId="EBI-747754">
        <id>P28799</id>
    </interactant>
    <interactant intactId="EBI-1058491">
        <id>Q96FW1</id>
        <label>OTUB1</label>
    </interactant>
    <organismsDiffer>false</organismsDiffer>
    <experiments>3</experiments>
</comment>
<comment type="interaction">
    <interactant intactId="EBI-747754">
        <id>P28799</id>
    </interactant>
    <interactant intactId="EBI-740446">
        <id>P32242</id>
        <label>OTX1</label>
    </interactant>
    <organismsDiffer>false</organismsDiffer>
    <experiments>10</experiments>
</comment>
<comment type="interaction">
    <interactant intactId="EBI-747754">
        <id>P28799</id>
    </interactant>
    <interactant intactId="EBI-10235794">
        <id>Q15077</id>
        <label>P2RY6</label>
    </interactant>
    <organismsDiffer>false</organismsDiffer>
    <experiments>3</experiments>
</comment>
<comment type="interaction">
    <interactant intactId="EBI-747754">
        <id>P28799</id>
    </interactant>
    <interactant intactId="EBI-395883">
        <id>P07237</id>
        <label>P4HB</label>
    </interactant>
    <organismsDiffer>false</organismsDiffer>
    <experiments>4</experiments>
</comment>
<comment type="interaction">
    <interactant intactId="EBI-747754">
        <id>P28799</id>
    </interactant>
    <interactant intactId="EBI-16399860">
        <id>O75781-2</id>
        <label>PALM</label>
    </interactant>
    <organismsDiffer>false</organismsDiffer>
    <experiments>3</experiments>
</comment>
<comment type="interaction">
    <interactant intactId="EBI-747754">
        <id>P28799</id>
    </interactant>
    <interactant intactId="EBI-17159452">
        <id>Q9NR21-5</id>
        <label>PARP11</label>
    </interactant>
    <organismsDiffer>false</organismsDiffer>
    <experiments>3</experiments>
</comment>
<comment type="interaction">
    <interactant intactId="EBI-747754">
        <id>P28799</id>
    </interactant>
    <interactant intactId="EBI-25861637">
        <id>Q86SE9-2</id>
        <label>PCGF5</label>
    </interactant>
    <organismsDiffer>false</organismsDiffer>
    <experiments>3</experiments>
</comment>
<comment type="interaction">
    <interactant intactId="EBI-747754">
        <id>P28799</id>
    </interactant>
    <interactant intactId="EBI-2557276">
        <id>O15534</id>
        <label>PER1</label>
    </interactant>
    <organismsDiffer>false</organismsDiffer>
    <experiments>3</experiments>
</comment>
<comment type="interaction">
    <interactant intactId="EBI-747754">
        <id>P28799</id>
    </interactant>
    <interactant intactId="EBI-17183069">
        <id>Q96FX8</id>
        <label>PERP</label>
    </interactant>
    <organismsDiffer>false</organismsDiffer>
    <experiments>3</experiments>
</comment>
<comment type="interaction">
    <interactant intactId="EBI-747754">
        <id>P28799</id>
    </interactant>
    <interactant intactId="EBI-12339509">
        <id>Q96LB9</id>
        <label>PGLYRP3</label>
    </interactant>
    <organismsDiffer>false</organismsDiffer>
    <experiments>3</experiments>
</comment>
<comment type="interaction">
    <interactant intactId="EBI-747754">
        <id>P28799</id>
    </interactant>
    <interactant intactId="EBI-4307517">
        <id>Q9BWX1</id>
        <label>PHF7</label>
    </interactant>
    <organismsDiffer>false</organismsDiffer>
    <experiments>3</experiments>
</comment>
<comment type="interaction">
    <interactant intactId="EBI-747754">
        <id>P28799</id>
    </interactant>
    <interactant intactId="EBI-14084211">
        <id>A2BDE7</id>
        <label>PHLDA1</label>
    </interactant>
    <organismsDiffer>false</organismsDiffer>
    <experiments>3</experiments>
</comment>
<comment type="interaction">
    <interactant intactId="EBI-747754">
        <id>P28799</id>
    </interactant>
    <interactant intactId="EBI-629434">
        <id>O75925</id>
        <label>PIAS1</label>
    </interactant>
    <organismsDiffer>false</organismsDiffer>
    <experiments>3</experiments>
</comment>
<comment type="interaction">
    <interactant intactId="EBI-747754">
        <id>P28799</id>
    </interactant>
    <interactant intactId="EBI-3916751">
        <id>Q9BZM1</id>
        <label>PLA2G12A</label>
    </interactant>
    <organismsDiffer>false</organismsDiffer>
    <experiments>3</experiments>
</comment>
<comment type="interaction">
    <interactant intactId="EBI-747754">
        <id>P28799</id>
    </interactant>
    <interactant intactId="EBI-21503705">
        <id>Q58EX7-2</id>
        <label>PLEKHG4</label>
    </interactant>
    <organismsDiffer>false</organismsDiffer>
    <experiments>3</experiments>
</comment>
<comment type="interaction">
    <interactant intactId="EBI-747754">
        <id>P28799</id>
    </interactant>
    <interactant intactId="EBI-12891828">
        <id>Q6ZR37</id>
        <label>PLEKHG7</label>
    </interactant>
    <organismsDiffer>false</organismsDiffer>
    <experiments>3</experiments>
</comment>
<comment type="interaction">
    <interactant intactId="EBI-747754">
        <id>P28799</id>
    </interactant>
    <interactant intactId="EBI-3919291">
        <id>Q9Y342</id>
        <label>PLLP</label>
    </interactant>
    <organismsDiffer>false</organismsDiffer>
    <experiments>3</experiments>
</comment>
<comment type="interaction">
    <interactant intactId="EBI-747754">
        <id>P28799</id>
    </interactant>
    <interactant intactId="EBI-18063495">
        <id>Q8TBJ4</id>
        <label>PLPPR1</label>
    </interactant>
    <organismsDiffer>false</organismsDiffer>
    <experiments>3</experiments>
</comment>
<comment type="interaction">
    <interactant intactId="EBI-747754">
        <id>P28799</id>
    </interactant>
    <interactant intactId="EBI-710067">
        <id>Q9H1D9</id>
        <label>POLR3F</label>
    </interactant>
    <organismsDiffer>false</organismsDiffer>
    <experiments>3</experiments>
</comment>
<comment type="interaction">
    <interactant intactId="EBI-747754">
        <id>P28799</id>
    </interactant>
    <interactant intactId="EBI-17236143">
        <id>Q12837</id>
        <label>POU4F2</label>
    </interactant>
    <organismsDiffer>false</organismsDiffer>
    <experiments>6</experiments>
</comment>
<comment type="interaction">
    <interactant intactId="EBI-747754">
        <id>P28799</id>
    </interactant>
    <interactant intactId="EBI-10196507">
        <id>P09565</id>
        <label>PP9974</label>
    </interactant>
    <organismsDiffer>false</organismsDiffer>
    <experiments>3</experiments>
</comment>
<comment type="interaction">
    <interactant intactId="EBI-747754">
        <id>P28799</id>
    </interactant>
    <interactant intactId="EBI-1383852">
        <id>P54646</id>
        <label>PRKAA2</label>
    </interactant>
    <organismsDiffer>false</organismsDiffer>
    <experiments>3</experiments>
</comment>
<comment type="interaction">
    <interactant intactId="EBI-747754">
        <id>P28799</id>
    </interactant>
    <interactant intactId="EBI-1053424">
        <id>O43741</id>
        <label>PRKAB2</label>
    </interactant>
    <organismsDiffer>false</organismsDiffer>
    <experiments>4</experiments>
</comment>
<comment type="interaction">
    <interactant intactId="EBI-747754">
        <id>P28799</id>
    </interactant>
    <interactant intactId="EBI-4290895">
        <id>P11908</id>
        <label>PRPS2</label>
    </interactant>
    <organismsDiffer>false</organismsDiffer>
    <experiments>3</experiments>
</comment>
<comment type="interaction">
    <interactant intactId="EBI-747754">
        <id>P28799</id>
    </interactant>
    <interactant intactId="EBI-716699">
        <id>P07602</id>
        <label>PSAP</label>
    </interactant>
    <organismsDiffer>false</organismsDiffer>
    <experiments>6</experiments>
</comment>
<comment type="interaction">
    <interactant intactId="EBI-747754">
        <id>P28799</id>
    </interactant>
    <interactant intactId="EBI-603329">
        <id>P40306</id>
        <label>PSMB10</label>
    </interactant>
    <organismsDiffer>false</organismsDiffer>
    <experiments>3</experiments>
</comment>
<comment type="interaction">
    <interactant intactId="EBI-747754">
        <id>P28799</id>
    </interactant>
    <interactant intactId="EBI-372312">
        <id>P28062-2</id>
        <label>PSMB8</label>
    </interactant>
    <organismsDiffer>false</organismsDiffer>
    <experiments>3</experiments>
</comment>
<comment type="interaction">
    <interactant intactId="EBI-747754">
        <id>P28799</id>
    </interactant>
    <interactant intactId="EBI-1056327">
        <id>Q8TBK9</id>
        <label>PTMA</label>
    </interactant>
    <organismsDiffer>false</organismsDiffer>
    <experiments>3</experiments>
</comment>
<comment type="interaction">
    <interactant intactId="EBI-747754">
        <id>P28799</id>
    </interactant>
    <interactant intactId="EBI-7199479">
        <id>Q8WUK0</id>
        <label>PTPMT1</label>
    </interactant>
    <organismsDiffer>false</organismsDiffer>
    <experiments>3</experiments>
</comment>
<comment type="interaction">
    <interactant intactId="EBI-747754">
        <id>P28799</id>
    </interactant>
    <interactant intactId="EBI-948453">
        <id>Q14671</id>
        <label>PUM1</label>
    </interactant>
    <organismsDiffer>false</organismsDiffer>
    <experiments>3</experiments>
</comment>
<comment type="interaction">
    <interactant intactId="EBI-747754">
        <id>P28799</id>
    </interactant>
    <interactant intactId="EBI-25841978">
        <id>Q7Z7K5</id>
        <label>PXN</label>
    </interactant>
    <organismsDiffer>false</organismsDiffer>
    <experiments>3</experiments>
</comment>
<comment type="interaction">
    <interactant intactId="EBI-747754">
        <id>P28799</id>
    </interactant>
    <interactant intactId="EBI-347462">
        <id>P47897</id>
        <label>QARS1</label>
    </interactant>
    <organismsDiffer>false</organismsDiffer>
    <experiments>3</experiments>
</comment>
<comment type="interaction">
    <interactant intactId="EBI-747754">
        <id>P28799</id>
    </interactant>
    <interactant intactId="EBI-954272">
        <id>Q96PK6</id>
        <label>RBM14</label>
    </interactant>
    <organismsDiffer>false</organismsDiffer>
    <experiments>3</experiments>
</comment>
<comment type="interaction">
    <interactant intactId="EBI-747754">
        <id>P28799</id>
    </interactant>
    <interactant intactId="EBI-21252376">
        <id>Q96PM5-4</id>
        <label>RCHY1</label>
    </interactant>
    <organismsDiffer>false</organismsDiffer>
    <experiments>3</experiments>
</comment>
<comment type="interaction">
    <interactant intactId="EBI-747754">
        <id>P28799</id>
    </interactant>
    <interactant intactId="EBI-746325">
        <id>Q8TCX5</id>
        <label>RHPN1</label>
    </interactant>
    <organismsDiffer>false</organismsDiffer>
    <experiments>3</experiments>
</comment>
<comment type="interaction">
    <interactant intactId="EBI-747754">
        <id>P28799</id>
    </interactant>
    <interactant intactId="EBI-25829984">
        <id>Q9ULX5</id>
        <label>RNF112</label>
    </interactant>
    <organismsDiffer>false</organismsDiffer>
    <experiments>3</experiments>
</comment>
<comment type="interaction">
    <interactant intactId="EBI-747754">
        <id>P28799</id>
    </interactant>
    <interactant intactId="EBI-749039">
        <id>Q8WVD3</id>
        <label>RNF138</label>
    </interactant>
    <organismsDiffer>false</organismsDiffer>
    <experiments>3</experiments>
</comment>
<comment type="interaction">
    <interactant intactId="EBI-747754">
        <id>P28799</id>
    </interactant>
    <interactant intactId="EBI-2130308">
        <id>Q9UBS8</id>
        <label>RNF14</label>
    </interactant>
    <organismsDiffer>false</organismsDiffer>
    <experiments>3</experiments>
</comment>
<comment type="interaction">
    <interactant intactId="EBI-747754">
        <id>P28799</id>
    </interactant>
    <interactant intactId="EBI-751555">
        <id>Q9H0X6</id>
        <label>RNF208</label>
    </interactant>
    <organismsDiffer>false</organismsDiffer>
    <experiments>3</experiments>
</comment>
<comment type="interaction">
    <interactant intactId="EBI-747754">
        <id>P28799</id>
    </interactant>
    <interactant intactId="EBI-347895">
        <id>P62244</id>
        <label>RPS15A</label>
    </interactant>
    <organismsDiffer>false</organismsDiffer>
    <experiments>3</experiments>
</comment>
<comment type="interaction">
    <interactant intactId="EBI-747754">
        <id>P28799</id>
    </interactant>
    <interactant intactId="EBI-10248967">
        <id>Q66K80</id>
        <label>RUSC1-AS1</label>
    </interactant>
    <organismsDiffer>false</organismsDiffer>
    <experiments>3</experiments>
</comment>
<comment type="interaction">
    <interactant intactId="EBI-747754">
        <id>P28799</id>
    </interactant>
    <interactant intactId="EBI-752324">
        <id>Q8N488</id>
        <label>RYBP</label>
    </interactant>
    <organismsDiffer>false</organismsDiffer>
    <experiments>3</experiments>
</comment>
<comment type="interaction">
    <interactant intactId="EBI-747754">
        <id>P28799</id>
    </interactant>
    <interactant intactId="EBI-4403649">
        <id>Q969E2</id>
        <label>SCAMP4</label>
    </interactant>
    <organismsDiffer>false</organismsDiffer>
    <experiments>3</experiments>
</comment>
<comment type="interaction">
    <interactant intactId="EBI-747754">
        <id>P28799</id>
    </interactant>
    <interactant intactId="EBI-1172957">
        <id>P34741</id>
        <label>SDC2</label>
    </interactant>
    <organismsDiffer>false</organismsDiffer>
    <experiments>3</experiments>
</comment>
<comment type="interaction">
    <interactant intactId="EBI-747754">
        <id>P28799</id>
    </interactant>
    <interactant intactId="EBI-79819">
        <id>P60896</id>
        <label>SEM1</label>
    </interactant>
    <organismsDiffer>false</organismsDiffer>
    <experiments>3</experiments>
</comment>
<comment type="interaction">
    <interactant intactId="EBI-747754">
        <id>P28799</id>
    </interactant>
    <interactant intactId="EBI-9089805">
        <id>Q9NTN9-3</id>
        <label>SEMA4G</label>
    </interactant>
    <organismsDiffer>false</organismsDiffer>
    <experiments>3</experiments>
</comment>
<comment type="interaction">
    <interactant intactId="EBI-747754">
        <id>P28799</id>
    </interactant>
    <interactant intactId="EBI-745901">
        <id>Q14141</id>
        <label>SEPTIN6</label>
    </interactant>
    <organismsDiffer>false</organismsDiffer>
    <experiments>3</experiments>
</comment>
<comment type="interaction">
    <interactant intactId="EBI-747754">
        <id>P28799</id>
    </interactant>
    <interactant intactId="EBI-1045571">
        <id>Q13530</id>
        <label>SERINC3</label>
    </interactant>
    <organismsDiffer>false</organismsDiffer>
    <experiments>3</experiments>
</comment>
<comment type="interaction">
    <interactant intactId="EBI-747754">
        <id>P28799</id>
    </interactant>
    <interactant intactId="EBI-347996">
        <id>O43765</id>
        <label>SGTA</label>
    </interactant>
    <organismsDiffer>false</organismsDiffer>
    <experiments>7</experiments>
</comment>
<comment type="interaction">
    <interactant intactId="EBI-747754">
        <id>P28799</id>
    </interactant>
    <interactant intactId="EBI-22000547">
        <id>Q9NUL5-3</id>
        <label>SHFL</label>
    </interactant>
    <organismsDiffer>false</organismsDiffer>
    <experiments>3</experiments>
</comment>
<comment type="interaction">
    <interactant intactId="EBI-747754">
        <id>P28799</id>
    </interactant>
    <interactant intactId="EBI-9092164">
        <id>O60902-3</id>
        <label>SHOX2</label>
    </interactant>
    <organismsDiffer>false</organismsDiffer>
    <experiments>3</experiments>
</comment>
<comment type="interaction">
    <interactant intactId="EBI-747754">
        <id>P28799</id>
    </interactant>
    <interactant intactId="EBI-358545">
        <id>Q9GZS3</id>
        <label>SKIC8</label>
    </interactant>
    <organismsDiffer>false</organismsDiffer>
    <experiments>3</experiments>
</comment>
<comment type="interaction">
    <interactant intactId="EBI-747754">
        <id>P28799</id>
    </interactant>
    <interactant intactId="EBI-12273450">
        <id>O15198-2</id>
        <label>SMAD9</label>
    </interactant>
    <organismsDiffer>false</organismsDiffer>
    <experiments>3</experiments>
</comment>
<comment type="interaction">
    <interactant intactId="EBI-747754">
        <id>P28799</id>
    </interactant>
    <interactant intactId="EBI-750494">
        <id>P49901</id>
        <label>SMCP</label>
    </interactant>
    <organismsDiffer>false</organismsDiffer>
    <experiments>3</experiments>
</comment>
<comment type="interaction">
    <interactant intactId="EBI-747754">
        <id>P28799</id>
    </interactant>
    <interactant intactId="EBI-9845742">
        <id>Q9HCE7-2</id>
        <label>SMURF1</label>
    </interactant>
    <organismsDiffer>false</organismsDiffer>
    <experiments>3</experiments>
</comment>
<comment type="interaction">
    <interactant intactId="EBI-747754">
        <id>P28799</id>
    </interactant>
    <interactant intactId="EBI-538492">
        <id>Q96DI7</id>
        <label>SNRNP40</label>
    </interactant>
    <organismsDiffer>false</organismsDiffer>
    <experiments>3</experiments>
</comment>
<comment type="interaction">
    <interactant intactId="EBI-747754">
        <id>P28799</id>
    </interactant>
    <interactant intactId="EBI-1057058">
        <id>Q99523</id>
        <label>SORT1</label>
    </interactant>
    <organismsDiffer>false</organismsDiffer>
    <experiments>3</experiments>
</comment>
<comment type="interaction">
    <interactant intactId="EBI-747754">
        <id>P28799</id>
    </interactant>
    <interactant intactId="EBI-8635958">
        <id>Q6RVD6</id>
        <label>SPATA8</label>
    </interactant>
    <organismsDiffer>false</organismsDiffer>
    <experiments>3</experiments>
</comment>
<comment type="interaction">
    <interactant intactId="EBI-747754">
        <id>P28799</id>
    </interactant>
    <interactant intactId="EBI-10200479">
        <id>P20155</id>
        <label>SPINK2</label>
    </interactant>
    <organismsDiffer>false</organismsDiffer>
    <experiments>3</experiments>
</comment>
<comment type="interaction">
    <interactant intactId="EBI-747754">
        <id>P28799</id>
    </interactant>
    <interactant intactId="EBI-10174456">
        <id>Q8N865</id>
        <label>SPMIP4</label>
    </interactant>
    <organismsDiffer>false</organismsDiffer>
    <experiments>3</experiments>
</comment>
<comment type="interaction">
    <interactant intactId="EBI-747754">
        <id>P28799</id>
    </interactant>
    <interactant intactId="EBI-7082156">
        <id>Q7Z698</id>
        <label>SPRED2</label>
    </interactant>
    <organismsDiffer>false</organismsDiffer>
    <experiments>3</experiments>
</comment>
<comment type="interaction">
    <interactant intactId="EBI-747754">
        <id>P28799</id>
    </interactant>
    <interactant intactId="EBI-742487">
        <id>O43597</id>
        <label>SPRY2</label>
    </interactant>
    <organismsDiffer>false</organismsDiffer>
    <experiments>3</experiments>
</comment>
<comment type="interaction">
    <interactant intactId="EBI-747754">
        <id>P28799</id>
    </interactant>
    <interactant intactId="EBI-354861">
        <id>Q9C004</id>
        <label>SPRY4</label>
    </interactant>
    <organismsDiffer>false</organismsDiffer>
    <experiments>3</experiments>
</comment>
<comment type="interaction">
    <interactant intactId="EBI-747754">
        <id>P28799</id>
    </interactant>
    <interactant intactId="EBI-3937206">
        <id>Q6PJ21</id>
        <label>SPSB3</label>
    </interactant>
    <organismsDiffer>false</organismsDiffer>
    <experiments>3</experiments>
</comment>
<comment type="interaction">
    <interactant intactId="EBI-747754">
        <id>P28799</id>
    </interactant>
    <interactant intactId="EBI-357085">
        <id>Q9UNE7</id>
        <label>STUB1</label>
    </interactant>
    <organismsDiffer>false</organismsDiffer>
    <experiments>3</experiments>
</comment>
<comment type="interaction">
    <interactant intactId="EBI-747754">
        <id>P28799</id>
    </interactant>
    <interactant intactId="EBI-723091">
        <id>Q8NBJ7</id>
        <label>SUMF2</label>
    </interactant>
    <organismsDiffer>false</organismsDiffer>
    <experiments>3</experiments>
</comment>
<comment type="interaction">
    <interactant intactId="EBI-747754">
        <id>P28799</id>
    </interactant>
    <interactant intactId="EBI-25861603">
        <id>Q17RD7-3</id>
        <label>SYT16</label>
    </interactant>
    <organismsDiffer>false</organismsDiffer>
    <experiments>3</experiments>
</comment>
<comment type="interaction">
    <interactant intactId="EBI-747754">
        <id>P28799</id>
    </interactant>
    <interactant intactId="EBI-745958">
        <id>Q5VWN6</id>
        <label>TASOR2</label>
    </interactant>
    <organismsDiffer>false</organismsDiffer>
    <experiments>3</experiments>
</comment>
<comment type="interaction">
    <interactant intactId="EBI-747754">
        <id>P28799</id>
    </interactant>
    <interactant intactId="EBI-12046643">
        <id>P17735</id>
        <label>TAT</label>
    </interactant>
    <organismsDiffer>false</organismsDiffer>
    <experiments>3</experiments>
</comment>
<comment type="interaction">
    <interactant intactId="EBI-747754">
        <id>P28799</id>
    </interactant>
    <interactant intactId="EBI-529518">
        <id>Q86VP1</id>
        <label>TAX1BP1</label>
    </interactant>
    <organismsDiffer>false</organismsDiffer>
    <experiments>3</experiments>
</comment>
<comment type="interaction">
    <interactant intactId="EBI-747754">
        <id>P28799</id>
    </interactant>
    <interactant intactId="EBI-716225">
        <id>P62380</id>
        <label>TBPL1</label>
    </interactant>
    <organismsDiffer>false</organismsDiffer>
    <experiments>3</experiments>
</comment>
<comment type="interaction">
    <interactant intactId="EBI-747754">
        <id>P28799</id>
    </interactant>
    <interactant intactId="EBI-2116184">
        <id>Q8IYN2</id>
        <label>TCEAL8</label>
    </interactant>
    <organismsDiffer>false</organismsDiffer>
    <experiments>3</experiments>
</comment>
<comment type="interaction">
    <interactant intactId="EBI-747754">
        <id>P28799</id>
    </interactant>
    <interactant intactId="EBI-348333">
        <id>Q13569</id>
        <label>TDG</label>
    </interactant>
    <organismsDiffer>false</organismsDiffer>
    <experiments>3</experiments>
</comment>
<comment type="interaction">
    <interactant intactId="EBI-747754">
        <id>P28799</id>
    </interactant>
    <interactant intactId="EBI-12151837">
        <id>P28347-2</id>
        <label>TEAD1</label>
    </interactant>
    <organismsDiffer>false</organismsDiffer>
    <experiments>3</experiments>
</comment>
<comment type="interaction">
    <interactant intactId="EBI-747754">
        <id>P28799</id>
    </interactant>
    <interactant intactId="EBI-13323487">
        <id>Q8NA77</id>
        <label>TEX19</label>
    </interactant>
    <organismsDiffer>false</organismsDiffer>
    <experiments>3</experiments>
</comment>
<comment type="interaction">
    <interactant intactId="EBI-747754">
        <id>P28799</id>
    </interactant>
    <interactant intactId="EBI-2372529">
        <id>O60830</id>
        <label>TIMM17B</label>
    </interactant>
    <organismsDiffer>false</organismsDiffer>
    <experiments>3</experiments>
</comment>
<comment type="interaction">
    <interactant intactId="EBI-747754">
        <id>P28799</id>
    </interactant>
    <interactant intactId="EBI-711424">
        <id>Q04724</id>
        <label>TLE1</label>
    </interactant>
    <organismsDiffer>false</organismsDiffer>
    <experiments>3</experiments>
</comment>
<comment type="interaction">
    <interactant intactId="EBI-747754">
        <id>P28799</id>
    </interactant>
    <interactant intactId="EBI-11741437">
        <id>Q08117-2</id>
        <label>TLE5</label>
    </interactant>
    <organismsDiffer>false</organismsDiffer>
    <experiments>3</experiments>
</comment>
<comment type="interaction">
    <interactant intactId="EBI-747754">
        <id>P28799</id>
    </interactant>
    <interactant intactId="EBI-25830583">
        <id>Q8N0U2</id>
        <label>TMEM61</label>
    </interactant>
    <organismsDiffer>false</organismsDiffer>
    <experiments>3</experiments>
</comment>
<comment type="interaction">
    <interactant intactId="EBI-747754">
        <id>P28799</id>
    </interactant>
    <interactant intactId="EBI-10242677">
        <id>Q53NU3</id>
        <label>tmp_locus_54</label>
    </interactant>
    <organismsDiffer>false</organismsDiffer>
    <experiments>3</experiments>
</comment>
<comment type="interaction">
    <interactant intactId="EBI-747754">
        <id>P28799</id>
    </interactant>
    <interactant intactId="EBI-25831574">
        <id>Q71RG4-4</id>
        <label>TMUB2</label>
    </interactant>
    <organismsDiffer>false</organismsDiffer>
    <experiments>3</experiments>
</comment>
<comment type="interaction">
    <interactant intactId="EBI-747754">
        <id>P28799</id>
    </interactant>
    <interactant intactId="EBI-299451">
        <id>P19438</id>
        <label>TNFRSF1A</label>
    </interactant>
    <organismsDiffer>false</organismsDiffer>
    <experiments>4</experiments>
</comment>
<comment type="interaction">
    <interactant intactId="EBI-747754">
        <id>P28799</id>
    </interactant>
    <interactant intactId="EBI-358983">
        <id>P20333</id>
        <label>TNFRSF1B</label>
    </interactant>
    <organismsDiffer>false</organismsDiffer>
    <experiments>5</experiments>
</comment>
<comment type="interaction">
    <interactant intactId="EBI-747754">
        <id>P28799</id>
    </interactant>
    <interactant intactId="EBI-17716262">
        <id>Q9UPQ4-2</id>
        <label>TRIM35</label>
    </interactant>
    <organismsDiffer>false</organismsDiffer>
    <experiments>3</experiments>
</comment>
<comment type="interaction">
    <interactant intactId="EBI-747754">
        <id>P28799</id>
    </interactant>
    <interactant intactId="EBI-3197877">
        <id>Q9BVS5</id>
        <label>TRMT61B</label>
    </interactant>
    <organismsDiffer>false</organismsDiffer>
    <experiments>3</experiments>
</comment>
<comment type="interaction">
    <interactant intactId="EBI-747754">
        <id>P28799</id>
    </interactant>
    <interactant intactId="EBI-25861172">
        <id>Q96Q11-3</id>
        <label>TRNT1</label>
    </interactant>
    <organismsDiffer>false</organismsDiffer>
    <experiments>3</experiments>
</comment>
<comment type="interaction">
    <interactant intactId="EBI-747754">
        <id>P28799</id>
    </interactant>
    <interactant intactId="EBI-739485">
        <id>Q9Y3Q8</id>
        <label>TSC22D4</label>
    </interactant>
    <organismsDiffer>false</organismsDiffer>
    <experiments>3</experiments>
</comment>
<comment type="interaction">
    <interactant intactId="EBI-747754">
        <id>P28799</id>
    </interactant>
    <interactant intactId="EBI-8652667">
        <id>O14817</id>
        <label>TSPAN4</label>
    </interactant>
    <organismsDiffer>false</organismsDiffer>
    <experiments>3</experiments>
</comment>
<comment type="interaction">
    <interactant intactId="EBI-747754">
        <id>P28799</id>
    </interactant>
    <interactant intactId="EBI-717229">
        <id>Q9Y5U2</id>
        <label>TSSC4</label>
    </interactant>
    <organismsDiffer>false</organismsDiffer>
    <experiments>3</experiments>
</comment>
<comment type="interaction">
    <interactant intactId="EBI-747754">
        <id>P28799</id>
    </interactant>
    <interactant intactId="EBI-742074">
        <id>Q99614</id>
        <label>TTC1</label>
    </interactant>
    <organismsDiffer>false</organismsDiffer>
    <experiments>3</experiments>
</comment>
<comment type="interaction">
    <interactant intactId="EBI-747754">
        <id>P28799</id>
    </interactant>
    <interactant intactId="EBI-9090990">
        <id>Q5W5X9-3</id>
        <label>TTC23</label>
    </interactant>
    <organismsDiffer>false</organismsDiffer>
    <experiments>3</experiments>
</comment>
<comment type="interaction">
    <interactant intactId="EBI-747754">
        <id>P28799</id>
    </interactant>
    <interactant intactId="EBI-9088812">
        <id>Q5VYS8-5</id>
        <label>TUT7</label>
    </interactant>
    <organismsDiffer>false</organismsDiffer>
    <experiments>3</experiments>
</comment>
<comment type="interaction">
    <interactant intactId="EBI-747754">
        <id>P28799</id>
    </interactant>
    <interactant intactId="EBI-5457544">
        <id>Q9BRU9</id>
        <label>UTP23</label>
    </interactant>
    <organismsDiffer>false</organismsDiffer>
    <experiments>3</experiments>
</comment>
<comment type="interaction">
    <interactant intactId="EBI-747754">
        <id>P28799</id>
    </interactant>
    <interactant intactId="EBI-10249550">
        <id>Q6EMK4</id>
        <label>VASN</label>
    </interactant>
    <organismsDiffer>false</organismsDiffer>
    <experiments>3</experiments>
</comment>
<comment type="interaction">
    <interactant intactId="EBI-747754">
        <id>P28799</id>
    </interactant>
    <interactant intactId="EBI-354022">
        <id>P45880</id>
        <label>VDAC2</label>
    </interactant>
    <organismsDiffer>false</organismsDiffer>
    <experiments>3</experiments>
</comment>
<comment type="interaction">
    <interactant intactId="EBI-747754">
        <id>P28799</id>
    </interactant>
    <interactant intactId="EBI-2850578">
        <id>Q8NEZ2</id>
        <label>VPS37A</label>
    </interactant>
    <organismsDiffer>false</organismsDiffer>
    <experiments>3</experiments>
</comment>
<comment type="interaction">
    <interactant intactId="EBI-747754">
        <id>P28799</id>
    </interactant>
    <interactant intactId="EBI-10270911">
        <id>Q8NEZ2-2</id>
        <label>VPS37A</label>
    </interactant>
    <organismsDiffer>false</organismsDiffer>
    <experiments>3</experiments>
</comment>
<comment type="interaction">
    <interactant intactId="EBI-747754">
        <id>P28799</id>
    </interactant>
    <interactant intactId="EBI-6427899">
        <id>P58304</id>
        <label>VSX2</label>
    </interactant>
    <organismsDiffer>false</organismsDiffer>
    <experiments>3</experiments>
</comment>
<comment type="interaction">
    <interactant intactId="EBI-747754">
        <id>P28799</id>
    </interactant>
    <interactant intactId="EBI-12040603">
        <id>Q9NZC7-5</id>
        <label>WWOX</label>
    </interactant>
    <organismsDiffer>false</organismsDiffer>
    <experiments>3</experiments>
</comment>
<comment type="interaction">
    <interactant intactId="EBI-747754">
        <id>P28799</id>
    </interactant>
    <interactant intactId="EBI-12111538">
        <id>Q8IY57-5</id>
        <label>YAF2</label>
    </interactant>
    <organismsDiffer>false</organismsDiffer>
    <experiments>3</experiments>
</comment>
<comment type="interaction">
    <interactant intactId="EBI-747754">
        <id>P28799</id>
    </interactant>
    <interactant intactId="EBI-2799703">
        <id>O95070</id>
        <label>YIF1A</label>
    </interactant>
    <organismsDiffer>false</organismsDiffer>
    <experiments>3</experiments>
</comment>
<comment type="interaction">
    <interactant intactId="EBI-747754">
        <id>P28799</id>
    </interactant>
    <interactant intactId="EBI-765538">
        <id>P25490</id>
        <label>YY1</label>
    </interactant>
    <organismsDiffer>false</organismsDiffer>
    <experiments>4</experiments>
</comment>
<comment type="interaction">
    <interactant intactId="EBI-747754">
        <id>P28799</id>
    </interactant>
    <interactant intactId="EBI-25842419">
        <id>O43167-2</id>
        <label>ZBTB24</label>
    </interactant>
    <organismsDiffer>false</organismsDiffer>
    <experiments>3</experiments>
</comment>
<comment type="interaction">
    <interactant intactId="EBI-747754">
        <id>P28799</id>
    </interactant>
    <interactant intactId="EBI-711679">
        <id>Q9NTW7</id>
        <label>ZFP64</label>
    </interactant>
    <organismsDiffer>false</organismsDiffer>
    <experiments>3</experiments>
</comment>
<comment type="interaction">
    <interactant intactId="EBI-747754">
        <id>P28799</id>
    </interactant>
    <interactant intactId="EBI-2602314">
        <id>Q15776</id>
        <label>ZKSCAN8</label>
    </interactant>
    <organismsDiffer>false</organismsDiffer>
    <experiments>3</experiments>
</comment>
<comment type="interaction">
    <interactant intactId="EBI-747754">
        <id>P28799</id>
    </interactant>
    <interactant intactId="EBI-2555767">
        <id>Q15973</id>
        <label>ZNF124</label>
    </interactant>
    <organismsDiffer>false</organismsDiffer>
    <experiments>3</experiments>
</comment>
<comment type="interaction">
    <interactant intactId="EBI-747754">
        <id>P28799</id>
    </interactant>
    <interactant intactId="EBI-10746567">
        <id>P52744</id>
        <label>ZNF138</label>
    </interactant>
    <organismsDiffer>false</organismsDiffer>
    <experiments>3</experiments>
</comment>
<comment type="interaction">
    <interactant intactId="EBI-747754">
        <id>P28799</id>
    </interactant>
    <interactant intactId="EBI-12055755">
        <id>Q9UJW8-4</id>
        <label>ZNF180</label>
    </interactant>
    <organismsDiffer>false</organismsDiffer>
    <experiments>3</experiments>
</comment>
<comment type="interaction">
    <interactant intactId="EBI-747754">
        <id>P28799</id>
    </interactant>
    <interactant intactId="EBI-8787052">
        <id>Q16600</id>
        <label>ZNF239</label>
    </interactant>
    <organismsDiffer>false</organismsDiffer>
    <experiments>3</experiments>
</comment>
<comment type="interaction">
    <interactant intactId="EBI-747754">
        <id>P28799</id>
    </interactant>
    <interactant intactId="EBI-8834821">
        <id>Q8WUU4</id>
        <label>ZNF296</label>
    </interactant>
    <organismsDiffer>false</organismsDiffer>
    <experiments>3</experiments>
</comment>
<comment type="interaction">
    <interactant intactId="EBI-747754">
        <id>P28799</id>
    </interactant>
    <interactant intactId="EBI-2813661">
        <id>Q8N895</id>
        <label>ZNF366</label>
    </interactant>
    <organismsDiffer>false</organismsDiffer>
    <experiments>3</experiments>
</comment>
<comment type="interaction">
    <interactant intactId="EBI-747754">
        <id>P28799</id>
    </interactant>
    <interactant intactId="EBI-12010736">
        <id>Q8N0Y2-2</id>
        <label>ZNF444</label>
    </interactant>
    <organismsDiffer>false</organismsDiffer>
    <experiments>3</experiments>
</comment>
<comment type="interaction">
    <interactant intactId="EBI-747754">
        <id>P28799</id>
    </interactant>
    <interactant intactId="EBI-25831733">
        <id>Q96MN9-2</id>
        <label>ZNF488</label>
    </interactant>
    <organismsDiffer>false</organismsDiffer>
    <experiments>3</experiments>
</comment>
<comment type="interaction">
    <interactant intactId="EBI-747754">
        <id>P28799</id>
    </interactant>
    <interactant intactId="EBI-10486136">
        <id>Q6ZNH5</id>
        <label>ZNF497</label>
    </interactant>
    <organismsDiffer>false</organismsDiffer>
    <experiments>3</experiments>
</comment>
<comment type="interaction">
    <interactant intactId="EBI-747754">
        <id>P28799</id>
    </interactant>
    <interactant intactId="EBI-10283126">
        <id>Q96C55</id>
        <label>ZNF524</label>
    </interactant>
    <organismsDiffer>false</organismsDiffer>
    <experiments>3</experiments>
</comment>
<comment type="interaction">
    <interactant intactId="EBI-747754">
        <id>P28799</id>
    </interactant>
    <interactant intactId="EBI-8490788">
        <id>Q68EA5</id>
        <label>ZNF57</label>
    </interactant>
    <organismsDiffer>false</organismsDiffer>
    <experiments>3</experiments>
</comment>
<comment type="interaction">
    <interactant intactId="EBI-747754">
        <id>P28799</id>
    </interactant>
    <interactant intactId="EBI-10172590">
        <id>Q7Z3I7</id>
        <label>ZNF572</label>
    </interactant>
    <organismsDiffer>false</organismsDiffer>
    <experiments>3</experiments>
</comment>
<comment type="interaction">
    <interactant intactId="EBI-747754">
        <id>P28799</id>
    </interactant>
    <interactant intactId="EBI-12038525">
        <id>Q96I27-2</id>
        <label>ZNF625</label>
    </interactant>
    <organismsDiffer>false</organismsDiffer>
    <experiments>3</experiments>
</comment>
<comment type="interaction">
    <interactant intactId="EBI-747754">
        <id>P28799</id>
    </interactant>
    <interactant intactId="EBI-12939666">
        <id>Q96N77-2</id>
        <label>ZNF641</label>
    </interactant>
    <organismsDiffer>false</organismsDiffer>
    <experiments>3</experiments>
</comment>
<comment type="interaction">
    <interactant intactId="EBI-747754">
        <id>P28799</id>
    </interactant>
    <interactant intactId="EBI-745276">
        <id>Q9BS34</id>
        <label>ZNF670</label>
    </interactant>
    <organismsDiffer>false</organismsDiffer>
    <experiments>3</experiments>
</comment>
<comment type="interaction">
    <interactant intactId="EBI-747754">
        <id>P28799</id>
    </interactant>
    <interactant intactId="EBI-11090299">
        <id>Q9H7X3</id>
        <label>ZNF696</label>
    </interactant>
    <organismsDiffer>false</organismsDiffer>
    <experiments>3</experiments>
</comment>
<comment type="interaction">
    <interactant intactId="EBI-747754">
        <id>P28799</id>
    </interactant>
    <interactant intactId="EBI-25845217">
        <id>Q5TEC3</id>
        <label>ZNF697</label>
    </interactant>
    <organismsDiffer>false</organismsDiffer>
    <experiments>3</experiments>
</comment>
<comment type="interaction">
    <interactant intactId="EBI-747754">
        <id>P28799</id>
    </interactant>
    <interactant intactId="EBI-10251462">
        <id>Q6NX45</id>
        <label>ZNF774</label>
    </interactant>
    <organismsDiffer>false</organismsDiffer>
    <experiments>3</experiments>
</comment>
<comment type="interaction">
    <interactant intactId="EBI-747754">
        <id>P28799</id>
    </interactant>
    <interactant intactId="EBI-2849119">
        <id>Q3KP31</id>
        <label>ZNF791</label>
    </interactant>
    <organismsDiffer>false</organismsDiffer>
    <experiments>3</experiments>
</comment>
<comment type="interaction">
    <interactant intactId="EBI-747754">
        <id>P28799</id>
    </interactant>
    <interactant intactId="EBI-3920053">
        <id>Q16670</id>
        <label>ZSCAN26</label>
    </interactant>
    <organismsDiffer>false</organismsDiffer>
    <experiments>3</experiments>
</comment>
<comment type="interaction">
    <interactant intactId="EBI-747754">
        <id>P28799</id>
    </interactant>
    <interactant intactId="EBI-751531">
        <id>O15535</id>
        <label>ZSCAN9</label>
    </interactant>
    <organismsDiffer>false</organismsDiffer>
    <experiments>3</experiments>
</comment>
<comment type="interaction">
    <interactant intactId="EBI-747754">
        <id>P28799</id>
    </interactant>
    <interactant intactId="EBI-10211777">
        <id>A0A384ME25</id>
    </interactant>
    <organismsDiffer>false</organismsDiffer>
    <experiments>3</experiments>
</comment>
<comment type="interaction">
    <interactant intactId="EBI-747754">
        <id>P28799</id>
    </interactant>
    <interactant intactId="EBI-25831943">
        <id>Q7L8T7</id>
    </interactant>
    <organismsDiffer>false</organismsDiffer>
    <experiments>3</experiments>
</comment>
<comment type="interaction">
    <interactant intactId="EBI-747754">
        <id>P28799</id>
    </interactant>
    <interactant intactId="EBI-9088990">
        <id>Q7Z783</id>
    </interactant>
    <organismsDiffer>false</organismsDiffer>
    <experiments>3</experiments>
</comment>
<comment type="interaction">
    <interactant intactId="EBI-747754">
        <id>P28799</id>
    </interactant>
    <interactant intactId="EBI-3957603">
        <id>P09022</id>
        <label>Hoxa1</label>
    </interactant>
    <organismsDiffer>true</organismsDiffer>
    <experiments>2</experiments>
</comment>
<comment type="interaction">
    <interactant intactId="EBI-25860013">
        <id>P28799-2</id>
    </interactant>
    <interactant intactId="EBI-718459">
        <id>Q9UII2</id>
        <label>ATP5IF1</label>
    </interactant>
    <organismsDiffer>false</organismsDiffer>
    <experiments>3</experiments>
</comment>
<comment type="interaction">
    <interactant intactId="EBI-25860013">
        <id>P28799-2</id>
    </interactant>
    <interactant intactId="EBI-12029902">
        <id>P50750-2</id>
        <label>CDK9</label>
    </interactant>
    <organismsDiffer>false</organismsDiffer>
    <experiments>3</experiments>
</comment>
<comment type="interaction">
    <interactant intactId="EBI-25860013">
        <id>P28799-2</id>
    </interactant>
    <interactant intactId="EBI-10192698">
        <id>Q02930-3</id>
        <label>CREB5</label>
    </interactant>
    <organismsDiffer>false</organismsDiffer>
    <experiments>3</experiments>
</comment>
<comment type="interaction">
    <interactant intactId="EBI-25860013">
        <id>P28799-2</id>
    </interactant>
    <interactant intactId="EBI-21555397">
        <id>P80370</id>
        <label>DLK1</label>
    </interactant>
    <organismsDiffer>false</organismsDiffer>
    <experiments>3</experiments>
</comment>
<comment type="interaction">
    <interactant intactId="EBI-25860013">
        <id>P28799-2</id>
    </interactant>
    <interactant intactId="EBI-719542">
        <id>O14531</id>
        <label>DPYSL4</label>
    </interactant>
    <organismsDiffer>false</organismsDiffer>
    <experiments>3</experiments>
</comment>
<comment type="interaction">
    <interactant intactId="EBI-25860013">
        <id>P28799-2</id>
    </interactant>
    <interactant intactId="EBI-739789">
        <id>Q92997</id>
        <label>DVL3</label>
    </interactant>
    <organismsDiffer>false</organismsDiffer>
    <experiments>3</experiments>
</comment>
<comment type="interaction">
    <interactant intactId="EBI-25860013">
        <id>P28799-2</id>
    </interactant>
    <interactant intactId="EBI-10697159">
        <id>O15540</id>
        <label>FABP7</label>
    </interactant>
    <organismsDiffer>false</organismsDiffer>
    <experiments>3</experiments>
</comment>
<comment type="interaction">
    <interactant intactId="EBI-25860013">
        <id>P28799-2</id>
    </interactant>
    <interactant intactId="EBI-741921">
        <id>Q96AQ9</id>
        <label>FAM131C</label>
    </interactant>
    <organismsDiffer>false</organismsDiffer>
    <experiments>3</experiments>
</comment>
<comment type="interaction">
    <interactant intactId="EBI-25860013">
        <id>P28799-2</id>
    </interactant>
    <interactant intactId="EBI-11956087">
        <id>Q5HYJ3-3</id>
        <label>FAM76B</label>
    </interactant>
    <organismsDiffer>false</organismsDiffer>
    <experiments>3</experiments>
</comment>
<comment type="interaction">
    <interactant intactId="EBI-25860013">
        <id>P28799-2</id>
    </interactant>
    <interactant intactId="EBI-25858908">
        <id>Q8N7T0</id>
        <label>hCG_1820408</label>
    </interactant>
    <organismsDiffer>false</organismsDiffer>
    <experiments>3</experiments>
</comment>
<comment type="interaction">
    <interactant intactId="EBI-25860013">
        <id>P28799-2</id>
    </interactant>
    <interactant intactId="EBI-740785">
        <id>P49639</id>
        <label>HOXA1</label>
    </interactant>
    <organismsDiffer>false</organismsDiffer>
    <experiments>3</experiments>
</comment>
<comment type="interaction">
    <interactant intactId="EBI-25860013">
        <id>P28799-2</id>
    </interactant>
    <interactant intactId="EBI-10246607">
        <id>Q5TA79</id>
        <label>LCE2A</label>
    </interactant>
    <organismsDiffer>false</organismsDiffer>
    <experiments>3</experiments>
</comment>
<comment type="interaction">
    <interactant intactId="EBI-25860013">
        <id>P28799-2</id>
    </interactant>
    <interactant intactId="EBI-10699187">
        <id>Q8IXL7-2</id>
        <label>MSRB3</label>
    </interactant>
    <organismsDiffer>false</organismsDiffer>
    <experiments>3</experiments>
</comment>
<comment type="interaction">
    <interactant intactId="EBI-25860013">
        <id>P28799-2</id>
    </interactant>
    <interactant intactId="EBI-6144053">
        <id>Q14995</id>
        <label>NR1D2</label>
    </interactant>
    <organismsDiffer>false</organismsDiffer>
    <experiments>3</experiments>
</comment>
<comment type="interaction">
    <interactant intactId="EBI-25860013">
        <id>P28799-2</id>
    </interactant>
    <interactant intactId="EBI-10196507">
        <id>P09565</id>
        <label>PP9974</label>
    </interactant>
    <organismsDiffer>false</organismsDiffer>
    <experiments>3</experiments>
</comment>
<comment type="interaction">
    <interactant intactId="EBI-25860013">
        <id>P28799-2</id>
    </interactant>
    <interactant intactId="EBI-948453">
        <id>Q14671</id>
        <label>PUM1</label>
    </interactant>
    <organismsDiffer>false</organismsDiffer>
    <experiments>3</experiments>
</comment>
<comment type="interaction">
    <interactant intactId="EBI-25860013">
        <id>P28799-2</id>
    </interactant>
    <interactant intactId="EBI-25841978">
        <id>Q7Z7K5</id>
        <label>PXN</label>
    </interactant>
    <organismsDiffer>false</organismsDiffer>
    <experiments>3</experiments>
</comment>
<comment type="interaction">
    <interactant intactId="EBI-25860013">
        <id>P28799-2</id>
    </interactant>
    <interactant intactId="EBI-4403649">
        <id>Q969E2</id>
        <label>SCAMP4</label>
    </interactant>
    <organismsDiffer>false</organismsDiffer>
    <experiments>3</experiments>
</comment>
<comment type="interaction">
    <interactant intactId="EBI-25860013">
        <id>P28799-2</id>
    </interactant>
    <interactant intactId="EBI-1172957">
        <id>P34741</id>
        <label>SDC2</label>
    </interactant>
    <organismsDiffer>false</organismsDiffer>
    <experiments>3</experiments>
</comment>
<comment type="interaction">
    <interactant intactId="EBI-25860013">
        <id>P28799-2</id>
    </interactant>
    <interactant intactId="EBI-724621">
        <id>Q9NTG7</id>
        <label>SIRT3</label>
    </interactant>
    <organismsDiffer>false</organismsDiffer>
    <experiments>3</experiments>
</comment>
<comment type="interaction">
    <interactant intactId="EBI-25860013">
        <id>P28799-2</id>
    </interactant>
    <interactant intactId="EBI-9087806">
        <id>O95416</id>
        <label>SOX14</label>
    </interactant>
    <organismsDiffer>false</organismsDiffer>
    <experiments>3</experiments>
</comment>
<comment type="interaction">
    <interactant intactId="EBI-25860013">
        <id>P28799-2</id>
    </interactant>
    <interactant intactId="EBI-5235340">
        <id>Q7Z699</id>
        <label>SPRED1</label>
    </interactant>
    <organismsDiffer>false</organismsDiffer>
    <experiments>3</experiments>
</comment>
<comment type="interaction">
    <interactant intactId="EBI-25860013">
        <id>P28799-2</id>
    </interactant>
    <interactant intactId="EBI-12046643">
        <id>P17735</id>
        <label>TAT</label>
    </interactant>
    <organismsDiffer>false</organismsDiffer>
    <experiments>3</experiments>
</comment>
<comment type="interaction">
    <interactant intactId="EBI-25860013">
        <id>P28799-2</id>
    </interactant>
    <interactant intactId="EBI-3923210">
        <id>Q8TDR4</id>
        <label>TCP10L</label>
    </interactant>
    <organismsDiffer>false</organismsDiffer>
    <experiments>3</experiments>
</comment>
<comment type="interaction">
    <interactant intactId="EBI-25860013">
        <id>P28799-2</id>
    </interactant>
    <interactant intactId="EBI-25831574">
        <id>Q71RG4-4</id>
        <label>TMUB2</label>
    </interactant>
    <organismsDiffer>false</organismsDiffer>
    <experiments>3</experiments>
</comment>
<comment type="interaction">
    <interactant intactId="EBI-25860013">
        <id>P28799-2</id>
    </interactant>
    <interactant intactId="EBI-21870909">
        <id>Q9Y2B4</id>
        <label>TP53TG5</label>
    </interactant>
    <organismsDiffer>false</organismsDiffer>
    <experiments>3</experiments>
</comment>
<comment type="interaction">
    <interactant intactId="EBI-25860013">
        <id>P28799-2</id>
    </interactant>
    <interactant intactId="EBI-765538">
        <id>P25490</id>
        <label>YY1</label>
    </interactant>
    <organismsDiffer>false</organismsDiffer>
    <experiments>3</experiments>
</comment>
<comment type="interaction">
    <interactant intactId="EBI-25860013">
        <id>P28799-2</id>
    </interactant>
    <interactant intactId="EBI-25850811">
        <id>Q9C0A1</id>
        <label>ZFHX2</label>
    </interactant>
    <organismsDiffer>false</organismsDiffer>
    <experiments>3</experiments>
</comment>
<comment type="interaction">
    <interactant intactId="EBI-25860013">
        <id>P28799-2</id>
    </interactant>
    <interactant intactId="EBI-12055755">
        <id>Q9UJW8-4</id>
        <label>ZNF180</label>
    </interactant>
    <organismsDiffer>false</organismsDiffer>
    <experiments>3</experiments>
</comment>
<comment type="interaction">
    <interactant intactId="EBI-25860013">
        <id>P28799-2</id>
    </interactant>
    <interactant intactId="EBI-2813661">
        <id>Q8N895</id>
        <label>ZNF366</label>
    </interactant>
    <organismsDiffer>false</organismsDiffer>
    <experiments>3</experiments>
</comment>
<comment type="interaction">
    <interactant intactId="EBI-25860013">
        <id>P28799-2</id>
    </interactant>
    <interactant intactId="EBI-13387614">
        <id>A0A087WZY1</id>
    </interactant>
    <organismsDiffer>false</organismsDiffer>
    <experiments>3</experiments>
</comment>
<comment type="interaction">
    <interactant intactId="EBI-25860013">
        <id>P28799-2</id>
    </interactant>
    <interactant intactId="EBI-25831943">
        <id>Q7L8T7</id>
    </interactant>
    <organismsDiffer>false</organismsDiffer>
    <experiments>3</experiments>
</comment>
<comment type="interaction">
    <interactant intactId="EBI-21335602">
        <id>PRO_0000012695</id>
    </interactant>
    <interactant intactId="EBI-2115097">
        <id>P07339</id>
        <label>CTSD</label>
    </interactant>
    <organismsDiffer>false</organismsDiffer>
    <experiments>2</experiments>
</comment>
<comment type="interaction">
    <interactant intactId="EBI-21335615">
        <id>PRO_0000012696</id>
    </interactant>
    <interactant intactId="EBI-2115097">
        <id>P07339</id>
        <label>CTSD</label>
    </interactant>
    <organismsDiffer>false</organismsDiffer>
    <experiments>2</experiments>
</comment>
<comment type="interaction">
    <interactant intactId="EBI-21335629">
        <id>PRO_0000012697</id>
    </interactant>
    <interactant intactId="EBI-2115097">
        <id>P07339</id>
        <label>CTSD</label>
    </interactant>
    <organismsDiffer>false</organismsDiffer>
    <experiments>2</experiments>
</comment>
<comment type="interaction">
    <interactant intactId="EBI-21335642">
        <id>PRO_0000012698</id>
    </interactant>
    <interactant intactId="EBI-2115097">
        <id>P07339</id>
        <label>CTSD</label>
    </interactant>
    <organismsDiffer>false</organismsDiffer>
    <experiments>2</experiments>
</comment>
<comment type="interaction">
    <interactant intactId="EBI-21335656">
        <id>PRO_0000012699</id>
    </interactant>
    <interactant intactId="EBI-2115097">
        <id>P07339</id>
        <label>CTSD</label>
    </interactant>
    <organismsDiffer>false</organismsDiffer>
    <experiments>2</experiments>
</comment>
<comment type="interaction">
    <interactant intactId="EBI-21335669">
        <id>PRO_0000012700</id>
    </interactant>
    <interactant intactId="EBI-2115097">
        <id>P07339</id>
        <label>CTSD</label>
    </interactant>
    <organismsDiffer>false</organismsDiffer>
    <experiments>2</experiments>
</comment>
<comment type="interaction">
    <interactant intactId="EBI-21335682">
        <id>PRO_0000012701</id>
    </interactant>
    <interactant intactId="EBI-2115097">
        <id>P07339</id>
        <label>CTSD</label>
    </interactant>
    <organismsDiffer>false</organismsDiffer>
    <experiments>2</experiments>
</comment>
<comment type="subcellular location">
    <subcellularLocation>
        <location evidence="13 16">Secreted</location>
    </subcellularLocation>
    <subcellularLocation>
        <location evidence="13 16 18 20 21">Lysosome</location>
    </subcellularLocation>
    <text evidence="2 13 16 18">Endocytosed by SORT1 and delivred to lysosomes (PubMed:21092856, PubMed:28073925). Targeted to lysosome by PSAP via M6PR and LRP1, in both biosynthetic and endocytic pathways (PubMed:26370502, PubMed:28073925). Co-localized with GBA1 in the intracellular trafficking compartments until to lysosome (By similarity).</text>
</comment>
<comment type="alternative products">
    <event type="alternative splicing"/>
    <isoform>
        <id>P28799-1</id>
        <name>1</name>
        <sequence type="displayed"/>
    </isoform>
    <isoform>
        <id>P28799-2</id>
        <name>2</name>
        <sequence type="described" ref="VSP_001837"/>
    </isoform>
    <isoform>
        <id>P28799-3</id>
        <name>3</name>
        <sequence type="described" ref="VSP_053472 VSP_053473"/>
    </isoform>
</comment>
<comment type="tissue specificity">
    <text>In myelogenous leukemic cell lines of promonocytic, promyelocytic, and proerythroid lineage, in fibroblasts, and very strongly in epithelial cell lines. Present in inflammatory cells and bone marrow. Highest levels in kidney.</text>
</comment>
<comment type="induction">
    <text evidence="18">Increased in response to lysosome alkalization.</text>
</comment>
<comment type="PTM">
    <text evidence="4 21">Cleaved by ELANE; proteolysis is blocked by SLPI and is concentration- and time-dependent and induces CXCL8/IL-8 production; granulin-3 and granulin-4 are resistant to ELANE (PubMed:12526812, PubMed:28743268). Cleaved by CTSL in lysosome thus regulating the maturation and turnover of progranulin within the lysosome (PubMed:28743268).</text>
</comment>
<comment type="disease" evidence="5 6 7">
    <disease id="DI-02402">
        <name>Frontotemporal dementia 2</name>
        <acronym>FTD2</acronym>
        <description>A form of dementia characterized by pathologic finding of frontotemporal lobar degeneration, presenile dementia with behavioral changes, deterioration of cognitive capacities and loss of memory. Gestural apraxia, parkinsonism, visual loss, and visual hallucinations are present in 25 to 40% of patients.</description>
        <dbReference type="MIM" id="607485"/>
    </disease>
    <text>The disease is caused by variants affecting the gene represented in this entry.</text>
</comment>
<comment type="disease" evidence="14">
    <disease id="DI-03493">
        <name>Ceroid lipofuscinosis, neuronal, 11</name>
        <acronym>CLN11</acronym>
        <description>A form of neuronal ceroid lipofuscinosis characterized by rapidly progressive visual loss due to retinal dystrophy, seizures, cerebellar ataxia, and cerebellar atrophy. Cognitive decline may also occur. Neuronal ceroid lipofuscinoses are progressive neurodegenerative, lysosomal storage diseases characterized by intracellular accumulation of autofluorescent liposomal material.</description>
        <dbReference type="MIM" id="614706"/>
    </disease>
    <text>The disease is caused by variants affecting the gene represented in this entry.</text>
</comment>
<comment type="similarity">
    <text evidence="30">Belongs to the granulin family.</text>
</comment>
<comment type="online information" name="Atlas of Genetics and Cytogenetics in Oncology and Haematology">
    <link uri="https://atlasgeneticsoncology.org/gene/40757/GRN"/>
</comment>
<keyword id="KW-0002">3D-structure</keyword>
<keyword id="KW-0025">Alternative splicing</keyword>
<keyword id="KW-0202">Cytokine</keyword>
<keyword id="KW-0903">Direct protein sequencing</keyword>
<keyword id="KW-1015">Disulfide bond</keyword>
<keyword id="KW-0325">Glycoprotein</keyword>
<keyword id="KW-0458">Lysosome</keyword>
<keyword id="KW-0523">Neurodegeneration</keyword>
<keyword id="KW-0525">Neuronal ceroid lipofuscinosis</keyword>
<keyword id="KW-1267">Proteomics identification</keyword>
<keyword id="KW-1185">Reference proteome</keyword>
<keyword id="KW-0677">Repeat</keyword>
<keyword id="KW-0964">Secreted</keyword>
<keyword id="KW-0732">Signal</keyword>
<sequence>MWTLVSWVALTAGLVAGTRCPDGQFCPVACCLDPGGASYSCCRPLLDKWPTTLSRHLGGPCQVDAHCSAGHSCIFTVSGTSSCCPFPEAVACGDGHHCCPRGFHCSADGRSCFQRSGNNSVGAIQCPDSQFECPDFSTCCVMVDGSWGCCPMPQASCCEDRVHCCPHGAFCDLVHTRCITPTGTHPLAKKLPAQRTNRAVALSSSVMCPDARSRCPDGSTCCELPSGKYGCCPMPNATCCSDHLHCCPQDTVCDLIQSKCLSKENATTDLLTKLPAHTVGDVKCDMEVSCPDGYTCCRLQSGAWGCCPFTQAVCCEDHIHCCPAGFTCDTQKGTCEQGPHQVPWMEKAPAHLSLPDPQALKRDVPCDNVSSCPSSDTCCQLTSGEWGCCPIPEAVCCSDHQHCCPQGYTCVAEGQCQRGSEIVAGLEKMPARRASLSHPRDIGCDQHTSCPVGQTCCPSLGGSWACCQLPHAVCCEDRQHCCPAGYTCNVKARSCEKEVVSAQPATFLARSPHVGVKDVECGEGHFCHDNQTCCRDNRQGWACCPYRQGVCCADRRHCCPAGFRCAARGTKCLRREAPRWDAPLRDPALRQLL</sequence>
<dbReference type="EMBL" id="X62320">
    <property type="protein sequence ID" value="CAA44196.1"/>
    <property type="molecule type" value="mRNA"/>
</dbReference>
<dbReference type="EMBL" id="AF055008">
    <property type="protein sequence ID" value="AAC09359.1"/>
    <property type="molecule type" value="mRNA"/>
</dbReference>
<dbReference type="EMBL" id="M75161">
    <property type="protein sequence ID" value="AAA58617.1"/>
    <property type="molecule type" value="mRNA"/>
</dbReference>
<dbReference type="EMBL" id="AY124489">
    <property type="protein sequence ID" value="AAM94026.1"/>
    <property type="molecule type" value="mRNA"/>
</dbReference>
<dbReference type="EMBL" id="BT006844">
    <property type="protein sequence ID" value="AAP35490.1"/>
    <property type="molecule type" value="mRNA"/>
</dbReference>
<dbReference type="EMBL" id="AK023348">
    <property type="protein sequence ID" value="BAB14535.1"/>
    <property type="molecule type" value="mRNA"/>
</dbReference>
<dbReference type="EMBL" id="AK222522">
    <property type="protein sequence ID" value="BAD96242.1"/>
    <property type="molecule type" value="mRNA"/>
</dbReference>
<dbReference type="EMBL" id="CH471178">
    <property type="protein sequence ID" value="EAW51599.1"/>
    <property type="molecule type" value="Genomic_DNA"/>
</dbReference>
<dbReference type="EMBL" id="CH471178">
    <property type="protein sequence ID" value="EAW51600.1"/>
    <property type="molecule type" value="Genomic_DNA"/>
</dbReference>
<dbReference type="EMBL" id="BC000324">
    <property type="protein sequence ID" value="AAH00324.1"/>
    <property type="molecule type" value="mRNA"/>
</dbReference>
<dbReference type="EMBL" id="BC010577">
    <property type="protein sequence ID" value="AAH10577.1"/>
    <property type="molecule type" value="mRNA"/>
</dbReference>
<dbReference type="CCDS" id="CCDS11483.1">
    <molecule id="P28799-1"/>
</dbReference>
<dbReference type="PIR" id="JC1284">
    <property type="entry name" value="GYHU"/>
</dbReference>
<dbReference type="RefSeq" id="NP_002078.1">
    <molecule id="P28799-1"/>
    <property type="nucleotide sequence ID" value="NM_002087.4"/>
</dbReference>
<dbReference type="RefSeq" id="XP_005257310.1">
    <property type="nucleotide sequence ID" value="XM_005257253.1"/>
</dbReference>
<dbReference type="PDB" id="1G26">
    <property type="method" value="NMR"/>
    <property type="chains" value="A=281-311"/>
</dbReference>
<dbReference type="PDB" id="2JYE">
    <property type="method" value="NMR"/>
    <property type="chains" value="A=281-337"/>
</dbReference>
<dbReference type="PDB" id="2JYT">
    <property type="method" value="NMR"/>
    <property type="chains" value="A=364-417"/>
</dbReference>
<dbReference type="PDB" id="2JYU">
    <property type="method" value="NMR"/>
    <property type="chains" value="A=364-417"/>
</dbReference>
<dbReference type="PDB" id="2JYV">
    <property type="method" value="NMR"/>
    <property type="chains" value="A=123-179"/>
</dbReference>
<dbReference type="PDB" id="6NUG">
    <property type="method" value="NMR"/>
    <property type="chains" value="A=284-307"/>
</dbReference>
<dbReference type="PDB" id="8T8R">
    <property type="method" value="X-ray"/>
    <property type="resolution" value="2.87 A"/>
    <property type="chains" value="B=578-593"/>
</dbReference>
<dbReference type="PDB" id="8T8S">
    <property type="method" value="X-ray"/>
    <property type="resolution" value="2.99 A"/>
    <property type="chains" value="C/D=578-593"/>
</dbReference>
<dbReference type="PDBsum" id="1G26"/>
<dbReference type="PDBsum" id="2JYE"/>
<dbReference type="PDBsum" id="2JYT"/>
<dbReference type="PDBsum" id="2JYU"/>
<dbReference type="PDBsum" id="2JYV"/>
<dbReference type="PDBsum" id="6NUG"/>
<dbReference type="PDBsum" id="8T8R"/>
<dbReference type="PDBsum" id="8T8S"/>
<dbReference type="SMR" id="P28799"/>
<dbReference type="BioGRID" id="109153">
    <property type="interactions" value="243"/>
</dbReference>
<dbReference type="CORUM" id="P28799"/>
<dbReference type="DIP" id="DIP-41742N"/>
<dbReference type="FunCoup" id="P28799">
    <property type="interactions" value="1096"/>
</dbReference>
<dbReference type="IntAct" id="P28799">
    <property type="interactions" value="462"/>
</dbReference>
<dbReference type="MINT" id="P28799"/>
<dbReference type="STRING" id="9606.ENSP00000053867"/>
<dbReference type="GlyConnect" id="1290">
    <property type="glycosylation" value="5 N-Linked glycans (1 site), 3 O-Linked glycans (1 site)"/>
</dbReference>
<dbReference type="GlyCosmos" id="P28799">
    <property type="glycosylation" value="6 sites, 5 glycans"/>
</dbReference>
<dbReference type="GlyGen" id="P28799">
    <property type="glycosylation" value="11 sites, 27 N-linked glycans (3 sites), 5 O-linked glycans (3 sites)"/>
</dbReference>
<dbReference type="iPTMnet" id="P28799"/>
<dbReference type="MetOSite" id="P28799"/>
<dbReference type="PhosphoSitePlus" id="P28799"/>
<dbReference type="SwissPalm" id="P28799"/>
<dbReference type="BioMuta" id="GRN"/>
<dbReference type="DMDM" id="77416865"/>
<dbReference type="jPOST" id="P28799"/>
<dbReference type="MassIVE" id="P28799"/>
<dbReference type="PaxDb" id="9606-ENSP00000053867"/>
<dbReference type="PeptideAtlas" id="P28799"/>
<dbReference type="ProteomicsDB" id="54499">
    <molecule id="P28799-1"/>
</dbReference>
<dbReference type="ProteomicsDB" id="54500">
    <molecule id="P28799-2"/>
</dbReference>
<dbReference type="ProteomicsDB" id="81234"/>
<dbReference type="Pumba" id="P28799"/>
<dbReference type="TopDownProteomics" id="P28799-2">
    <molecule id="P28799-2"/>
</dbReference>
<dbReference type="TopDownProteomics" id="P28799-3">
    <molecule id="P28799-3"/>
</dbReference>
<dbReference type="Antibodypedia" id="1406">
    <property type="antibodies" value="663 antibodies from 37 providers"/>
</dbReference>
<dbReference type="DNASU" id="2896"/>
<dbReference type="Ensembl" id="ENST00000053867.8">
    <molecule id="P28799-1"/>
    <property type="protein sequence ID" value="ENSP00000053867.2"/>
    <property type="gene ID" value="ENSG00000030582.19"/>
</dbReference>
<dbReference type="GeneID" id="2896"/>
<dbReference type="KEGG" id="hsa:2896"/>
<dbReference type="MANE-Select" id="ENST00000053867.8">
    <property type="protein sequence ID" value="ENSP00000053867.2"/>
    <property type="RefSeq nucleotide sequence ID" value="NM_002087.4"/>
    <property type="RefSeq protein sequence ID" value="NP_002078.1"/>
</dbReference>
<dbReference type="UCSC" id="uc002igp.2">
    <molecule id="P28799-1"/>
    <property type="organism name" value="human"/>
</dbReference>
<dbReference type="AGR" id="HGNC:4601"/>
<dbReference type="CTD" id="2896"/>
<dbReference type="DisGeNET" id="2896"/>
<dbReference type="GeneCards" id="GRN"/>
<dbReference type="GeneReviews" id="GRN"/>
<dbReference type="HGNC" id="HGNC:4601">
    <property type="gene designation" value="GRN"/>
</dbReference>
<dbReference type="HPA" id="ENSG00000030582">
    <property type="expression patterns" value="Low tissue specificity"/>
</dbReference>
<dbReference type="MalaCards" id="GRN"/>
<dbReference type="MIM" id="138945">
    <property type="type" value="gene"/>
</dbReference>
<dbReference type="MIM" id="607485">
    <property type="type" value="phenotype"/>
</dbReference>
<dbReference type="MIM" id="614706">
    <property type="type" value="phenotype"/>
</dbReference>
<dbReference type="neXtProt" id="NX_P28799"/>
<dbReference type="NIAGADS" id="ENSG00000030582"/>
<dbReference type="OpenTargets" id="ENSG00000030582"/>
<dbReference type="Orphanet" id="275864">
    <property type="disease" value="Behavioral variant of frontotemporal dementia"/>
</dbReference>
<dbReference type="Orphanet" id="314629">
    <property type="disease" value="CLN11 disease"/>
</dbReference>
<dbReference type="Orphanet" id="100070">
    <property type="disease" value="Progressive non-fluent aphasia"/>
</dbReference>
<dbReference type="Orphanet" id="100069">
    <property type="disease" value="Semantic dementia"/>
</dbReference>
<dbReference type="PharmGKB" id="PA28998"/>
<dbReference type="VEuPathDB" id="HostDB:ENSG00000030582"/>
<dbReference type="eggNOG" id="KOG4296">
    <property type="taxonomic scope" value="Eukaryota"/>
</dbReference>
<dbReference type="GeneTree" id="ENSGT00470000042293"/>
<dbReference type="HOGENOM" id="CLU_026274_0_0_1"/>
<dbReference type="InParanoid" id="P28799"/>
<dbReference type="OMA" id="CCPYSSA"/>
<dbReference type="OrthoDB" id="5854875at2759"/>
<dbReference type="PAN-GO" id="P28799">
    <property type="GO annotations" value="2 GO annotations based on evolutionary models"/>
</dbReference>
<dbReference type="PhylomeDB" id="P28799"/>
<dbReference type="TreeFam" id="TF319678"/>
<dbReference type="PathwayCommons" id="P28799"/>
<dbReference type="Reactome" id="R-HSA-6798695">
    <property type="pathway name" value="Neutrophil degranulation"/>
</dbReference>
<dbReference type="SignaLink" id="P28799"/>
<dbReference type="SIGNOR" id="P28799"/>
<dbReference type="BioGRID-ORCS" id="2896">
    <property type="hits" value="18 hits in 1158 CRISPR screens"/>
</dbReference>
<dbReference type="ChiTaRS" id="GRN">
    <property type="organism name" value="human"/>
</dbReference>
<dbReference type="EvolutionaryTrace" id="P28799"/>
<dbReference type="GeneWiki" id="Granulin"/>
<dbReference type="GenomeRNAi" id="2896"/>
<dbReference type="Pharos" id="P28799">
    <property type="development level" value="Tbio"/>
</dbReference>
<dbReference type="PRO" id="PR:P28799"/>
<dbReference type="Proteomes" id="UP000005640">
    <property type="component" value="Chromosome 17"/>
</dbReference>
<dbReference type="RNAct" id="P28799">
    <property type="molecule type" value="protein"/>
</dbReference>
<dbReference type="Bgee" id="ENSG00000030582">
    <property type="expression patterns" value="Expressed in monocyte and 210 other cell types or tissues"/>
</dbReference>
<dbReference type="ExpressionAtlas" id="P28799">
    <property type="expression patterns" value="baseline and differential"/>
</dbReference>
<dbReference type="GO" id="GO:0035578">
    <property type="term" value="C:azurophil granule lumen"/>
    <property type="evidence" value="ECO:0000304"/>
    <property type="project" value="Reactome"/>
</dbReference>
<dbReference type="GO" id="GO:0150053">
    <property type="term" value="C:cerebellar climbing fiber to Purkinje cell synapse"/>
    <property type="evidence" value="ECO:0007669"/>
    <property type="project" value="Ensembl"/>
</dbReference>
<dbReference type="GO" id="GO:0005783">
    <property type="term" value="C:endoplasmic reticulum"/>
    <property type="evidence" value="ECO:0000314"/>
    <property type="project" value="UniProtKB"/>
</dbReference>
<dbReference type="GO" id="GO:0005768">
    <property type="term" value="C:endosome"/>
    <property type="evidence" value="ECO:0000314"/>
    <property type="project" value="HPA"/>
</dbReference>
<dbReference type="GO" id="GO:0070062">
    <property type="term" value="C:extracellular exosome"/>
    <property type="evidence" value="ECO:0007005"/>
    <property type="project" value="UniProtKB"/>
</dbReference>
<dbReference type="GO" id="GO:0005576">
    <property type="term" value="C:extracellular region"/>
    <property type="evidence" value="ECO:0000314"/>
    <property type="project" value="UniProtKB"/>
</dbReference>
<dbReference type="GO" id="GO:0005615">
    <property type="term" value="C:extracellular space"/>
    <property type="evidence" value="ECO:0000314"/>
    <property type="project" value="ARUK-UCL"/>
</dbReference>
<dbReference type="GO" id="GO:0005794">
    <property type="term" value="C:Golgi apparatus"/>
    <property type="evidence" value="ECO:0000314"/>
    <property type="project" value="UniProtKB"/>
</dbReference>
<dbReference type="GO" id="GO:0005770">
    <property type="term" value="C:late endosome"/>
    <property type="evidence" value="ECO:0000314"/>
    <property type="project" value="UniProtKB"/>
</dbReference>
<dbReference type="GO" id="GO:0005765">
    <property type="term" value="C:lysosomal membrane"/>
    <property type="evidence" value="ECO:0000314"/>
    <property type="project" value="UniProtKB"/>
</dbReference>
<dbReference type="GO" id="GO:0005764">
    <property type="term" value="C:lysosome"/>
    <property type="evidence" value="ECO:0000314"/>
    <property type="project" value="HPA"/>
</dbReference>
<dbReference type="GO" id="GO:0016020">
    <property type="term" value="C:membrane"/>
    <property type="evidence" value="ECO:0000314"/>
    <property type="project" value="UniProtKB"/>
</dbReference>
<dbReference type="GO" id="GO:0005886">
    <property type="term" value="C:plasma membrane"/>
    <property type="evidence" value="ECO:0000314"/>
    <property type="project" value="UniProtKB"/>
</dbReference>
<dbReference type="GO" id="GO:0005802">
    <property type="term" value="C:trans-Golgi network"/>
    <property type="evidence" value="ECO:0000250"/>
    <property type="project" value="UniProtKB"/>
</dbReference>
<dbReference type="GO" id="GO:0005125">
    <property type="term" value="F:cytokine activity"/>
    <property type="evidence" value="ECO:0007669"/>
    <property type="project" value="UniProtKB-KW"/>
</dbReference>
<dbReference type="GO" id="GO:0008083">
    <property type="term" value="F:growth factor activity"/>
    <property type="evidence" value="ECO:0000304"/>
    <property type="project" value="ProtInc"/>
</dbReference>
<dbReference type="GO" id="GO:0051087">
    <property type="term" value="F:protein-folding chaperone binding"/>
    <property type="evidence" value="ECO:0000314"/>
    <property type="project" value="UniProtKB"/>
</dbReference>
<dbReference type="GO" id="GO:0003723">
    <property type="term" value="F:RNA binding"/>
    <property type="evidence" value="ECO:0007005"/>
    <property type="project" value="UniProtKB"/>
</dbReference>
<dbReference type="GO" id="GO:0002265">
    <property type="term" value="P:astrocyte activation involved in immune response"/>
    <property type="evidence" value="ECO:0000250"/>
    <property type="project" value="UniProtKB"/>
</dbReference>
<dbReference type="GO" id="GO:0001835">
    <property type="term" value="P:blastocyst hatching"/>
    <property type="evidence" value="ECO:0007669"/>
    <property type="project" value="Ensembl"/>
</dbReference>
<dbReference type="GO" id="GO:0007566">
    <property type="term" value="P:embryo implantation"/>
    <property type="evidence" value="ECO:0007669"/>
    <property type="project" value="Ensembl"/>
</dbReference>
<dbReference type="GO" id="GO:0050673">
    <property type="term" value="P:epithelial cell proliferation"/>
    <property type="evidence" value="ECO:0007669"/>
    <property type="project" value="Ensembl"/>
</dbReference>
<dbReference type="GO" id="GO:0035641">
    <property type="term" value="P:locomotory exploration behavior"/>
    <property type="evidence" value="ECO:0007669"/>
    <property type="project" value="Ensembl"/>
</dbReference>
<dbReference type="GO" id="GO:0007042">
    <property type="term" value="P:lysosomal lumen acidification"/>
    <property type="evidence" value="ECO:0000315"/>
    <property type="project" value="UniProtKB"/>
</dbReference>
<dbReference type="GO" id="GO:1905146">
    <property type="term" value="P:lysosomal protein catabolic process"/>
    <property type="evidence" value="ECO:0007669"/>
    <property type="project" value="Ensembl"/>
</dbReference>
<dbReference type="GO" id="GO:0007041">
    <property type="term" value="P:lysosomal transport"/>
    <property type="evidence" value="ECO:0000315"/>
    <property type="project" value="UniProtKB"/>
</dbReference>
<dbReference type="GO" id="GO:0007040">
    <property type="term" value="P:lysosome organization"/>
    <property type="evidence" value="ECO:0000250"/>
    <property type="project" value="UniProtKB"/>
</dbReference>
<dbReference type="GO" id="GO:0099558">
    <property type="term" value="P:maintenance of synapse structure"/>
    <property type="evidence" value="ECO:0007669"/>
    <property type="project" value="Ensembl"/>
</dbReference>
<dbReference type="GO" id="GO:0002282">
    <property type="term" value="P:microglial cell activation involved in immune response"/>
    <property type="evidence" value="ECO:0000250"/>
    <property type="project" value="UniProtKB"/>
</dbReference>
<dbReference type="GO" id="GO:1903979">
    <property type="term" value="P:negative regulation of microglial cell activation"/>
    <property type="evidence" value="ECO:0000250"/>
    <property type="project" value="UniProtKB"/>
</dbReference>
<dbReference type="GO" id="GO:0043524">
    <property type="term" value="P:negative regulation of neuron apoptotic process"/>
    <property type="evidence" value="ECO:0000314"/>
    <property type="project" value="UniProtKB"/>
</dbReference>
<dbReference type="GO" id="GO:1902564">
    <property type="term" value="P:negative regulation of neutrophil activation"/>
    <property type="evidence" value="ECO:0000314"/>
    <property type="project" value="UniProtKB"/>
</dbReference>
<dbReference type="GO" id="GO:0060266">
    <property type="term" value="P:negative regulation of respiratory burst involved in inflammatory response"/>
    <property type="evidence" value="ECO:0000314"/>
    <property type="project" value="UniProtKB"/>
</dbReference>
<dbReference type="GO" id="GO:0045766">
    <property type="term" value="P:positive regulation of angiogenesis"/>
    <property type="evidence" value="ECO:0000250"/>
    <property type="project" value="UniProtKB"/>
</dbReference>
<dbReference type="GO" id="GO:1905247">
    <property type="term" value="P:positive regulation of aspartic-type peptidase activity"/>
    <property type="evidence" value="ECO:0000315"/>
    <property type="project" value="UniProtKB"/>
</dbReference>
<dbReference type="GO" id="GO:0048680">
    <property type="term" value="P:positive regulation of axon regeneration"/>
    <property type="evidence" value="ECO:0000250"/>
    <property type="project" value="UniProtKB"/>
</dbReference>
<dbReference type="GO" id="GO:0030335">
    <property type="term" value="P:positive regulation of cell migration"/>
    <property type="evidence" value="ECO:0000315"/>
    <property type="project" value="ARUK-UCL"/>
</dbReference>
<dbReference type="GO" id="GO:1900426">
    <property type="term" value="P:positive regulation of defense response to bacterium"/>
    <property type="evidence" value="ECO:0000250"/>
    <property type="project" value="UniProtKB"/>
</dbReference>
<dbReference type="GO" id="GO:0010595">
    <property type="term" value="P:positive regulation of endothelial cell migration"/>
    <property type="evidence" value="ECO:0000250"/>
    <property type="project" value="UniProtKB"/>
</dbReference>
<dbReference type="GO" id="GO:0050679">
    <property type="term" value="P:positive regulation of epithelial cell proliferation"/>
    <property type="evidence" value="ECO:0000314"/>
    <property type="project" value="UniProtKB"/>
</dbReference>
<dbReference type="GO" id="GO:0106016">
    <property type="term" value="P:positive regulation of inflammatory response to wounding"/>
    <property type="evidence" value="ECO:0000250"/>
    <property type="project" value="UniProtKB"/>
</dbReference>
<dbReference type="GO" id="GO:1905673">
    <property type="term" value="P:positive regulation of lysosome organization"/>
    <property type="evidence" value="ECO:0000314"/>
    <property type="project" value="UniProtKB"/>
</dbReference>
<dbReference type="GO" id="GO:0043525">
    <property type="term" value="P:positive regulation of neuron apoptotic process"/>
    <property type="evidence" value="ECO:0000250"/>
    <property type="project" value="UniProtKB"/>
</dbReference>
<dbReference type="GO" id="GO:1903334">
    <property type="term" value="P:positive regulation of protein folding"/>
    <property type="evidence" value="ECO:0000250"/>
    <property type="project" value="UniProtKB"/>
</dbReference>
<dbReference type="GO" id="GO:1904075">
    <property type="term" value="P:positive regulation of trophectodermal cell proliferation"/>
    <property type="evidence" value="ECO:0007669"/>
    <property type="project" value="Ensembl"/>
</dbReference>
<dbReference type="GO" id="GO:0050821">
    <property type="term" value="P:protein stabilization"/>
    <property type="evidence" value="ECO:0000315"/>
    <property type="project" value="UniProtKB"/>
</dbReference>
<dbReference type="GO" id="GO:0050727">
    <property type="term" value="P:regulation of inflammatory response"/>
    <property type="evidence" value="ECO:0000318"/>
    <property type="project" value="GO_Central"/>
</dbReference>
<dbReference type="GO" id="GO:0060041">
    <property type="term" value="P:retina development in camera-type eye"/>
    <property type="evidence" value="ECO:0007669"/>
    <property type="project" value="Ensembl"/>
</dbReference>
<dbReference type="GO" id="GO:0007165">
    <property type="term" value="P:signal transduction"/>
    <property type="evidence" value="ECO:0000303"/>
    <property type="project" value="ProtInc"/>
</dbReference>
<dbReference type="GO" id="GO:0001834">
    <property type="term" value="P:trophectodermal cell proliferation"/>
    <property type="evidence" value="ECO:0007669"/>
    <property type="project" value="Ensembl"/>
</dbReference>
<dbReference type="FunFam" id="2.10.25.160:FF:000001">
    <property type="entry name" value="Granulin precursor"/>
    <property type="match status" value="5"/>
</dbReference>
<dbReference type="FunFam" id="2.10.25.160:FF:000004">
    <property type="entry name" value="Granulin precursor"/>
    <property type="match status" value="1"/>
</dbReference>
<dbReference type="FunFam" id="2.10.25.160:FF:000003">
    <property type="entry name" value="Progranulin"/>
    <property type="match status" value="1"/>
</dbReference>
<dbReference type="Gene3D" id="2.10.25.160">
    <property type="entry name" value="Granulin"/>
    <property type="match status" value="7"/>
</dbReference>
<dbReference type="InterPro" id="IPR000118">
    <property type="entry name" value="Granulin"/>
</dbReference>
<dbReference type="InterPro" id="IPR039036">
    <property type="entry name" value="Granulin_fam"/>
</dbReference>
<dbReference type="InterPro" id="IPR037277">
    <property type="entry name" value="Granulin_sf"/>
</dbReference>
<dbReference type="PANTHER" id="PTHR12274">
    <property type="entry name" value="GRANULIN"/>
    <property type="match status" value="1"/>
</dbReference>
<dbReference type="PANTHER" id="PTHR12274:SF3">
    <property type="entry name" value="PROGRANULIN"/>
    <property type="match status" value="1"/>
</dbReference>
<dbReference type="Pfam" id="PF00396">
    <property type="entry name" value="Granulin"/>
    <property type="match status" value="7"/>
</dbReference>
<dbReference type="SMART" id="SM00277">
    <property type="entry name" value="GRAN"/>
    <property type="match status" value="7"/>
</dbReference>
<dbReference type="SUPFAM" id="SSF57277">
    <property type="entry name" value="Granulin repeat"/>
    <property type="match status" value="6"/>
</dbReference>
<dbReference type="PROSITE" id="PS00799">
    <property type="entry name" value="GRANULINS"/>
    <property type="match status" value="7"/>
</dbReference>
<evidence type="ECO:0000250" key="1">
    <source>
        <dbReference type="UniProtKB" id="P23785"/>
    </source>
</evidence>
<evidence type="ECO:0000250" key="2">
    <source>
        <dbReference type="UniProtKB" id="P28798"/>
    </source>
</evidence>
<evidence type="ECO:0000255" key="3"/>
<evidence type="ECO:0000269" key="4">
    <source>
    </source>
</evidence>
<evidence type="ECO:0000269" key="5">
    <source>
    </source>
</evidence>
<evidence type="ECO:0000269" key="6">
    <source>
    </source>
</evidence>
<evidence type="ECO:0000269" key="7">
    <source>
    </source>
</evidence>
<evidence type="ECO:0000269" key="8">
    <source>
    </source>
</evidence>
<evidence type="ECO:0000269" key="9">
    <source>
    </source>
</evidence>
<evidence type="ECO:0000269" key="10">
    <source>
    </source>
</evidence>
<evidence type="ECO:0000269" key="11">
    <source>
    </source>
</evidence>
<evidence type="ECO:0000269" key="12">
    <source>
    </source>
</evidence>
<evidence type="ECO:0000269" key="13">
    <source>
    </source>
</evidence>
<evidence type="ECO:0000269" key="14">
    <source>
    </source>
</evidence>
<evidence type="ECO:0000269" key="15">
    <source>
    </source>
</evidence>
<evidence type="ECO:0000269" key="16">
    <source>
    </source>
</evidence>
<evidence type="ECO:0000269" key="17">
    <source>
    </source>
</evidence>
<evidence type="ECO:0000269" key="18">
    <source>
    </source>
</evidence>
<evidence type="ECO:0000269" key="19">
    <source>
    </source>
</evidence>
<evidence type="ECO:0000269" key="20">
    <source>
    </source>
</evidence>
<evidence type="ECO:0000269" key="21">
    <source>
    </source>
</evidence>
<evidence type="ECO:0000303" key="22">
    <source>
    </source>
</evidence>
<evidence type="ECO:0000303" key="23">
    <source>
    </source>
</evidence>
<evidence type="ECO:0000303" key="24">
    <source>
    </source>
</evidence>
<evidence type="ECO:0000303" key="25">
    <source>
    </source>
</evidence>
<evidence type="ECO:0000303" key="26">
    <source>
    </source>
</evidence>
<evidence type="ECO:0000303" key="27">
    <source>
    </source>
</evidence>
<evidence type="ECO:0000303" key="28">
    <source ref="4"/>
</evidence>
<evidence type="ECO:0000303" key="29">
    <source ref="6"/>
</evidence>
<evidence type="ECO:0000305" key="30"/>
<evidence type="ECO:0000312" key="31">
    <source>
        <dbReference type="HGNC" id="HGNC:4601"/>
    </source>
</evidence>
<evidence type="ECO:0007829" key="32">
    <source>
        <dbReference type="PDB" id="1G26"/>
    </source>
</evidence>
<evidence type="ECO:0007829" key="33">
    <source>
        <dbReference type="PDB" id="2JYE"/>
    </source>
</evidence>
<evidence type="ECO:0007829" key="34">
    <source>
        <dbReference type="PDB" id="2JYT"/>
    </source>
</evidence>
<evidence type="ECO:0007829" key="35">
    <source>
        <dbReference type="PDB" id="2JYU"/>
    </source>
</evidence>
<evidence type="ECO:0007829" key="36">
    <source>
        <dbReference type="PDB" id="2JYV"/>
    </source>
</evidence>
<proteinExistence type="evidence at protein level"/>
<accession>P28799</accession>
<accession>D3DX55</accession>
<accession>P23781</accession>
<accession>P23782</accession>
<accession>P23783</accession>
<accession>P23784</accession>
<accession>Q53HQ8</accession>
<accession>Q53Y88</accession>
<accession>Q540U8</accession>
<accession>Q9BWE7</accession>
<accession>Q9H8S1</accession>
<accession>Q9UCH0</accession>
<feature type="signal peptide" evidence="3">
    <location>
        <begin position="1"/>
        <end position="17"/>
    </location>
</feature>
<feature type="chain" id="PRO_0000012693" description="Progranulin">
    <location>
        <begin position="18"/>
        <end position="593"/>
    </location>
</feature>
<feature type="peptide" id="PRO_0000012694" description="Paragranulin">
    <location>
        <begin position="18"/>
        <end position="47" status="uncertain"/>
    </location>
</feature>
<feature type="peptide" id="PRO_0000012695" description="Granulin-1">
    <location>
        <begin position="58" status="uncertain"/>
        <end position="113" status="uncertain"/>
    </location>
</feature>
<feature type="peptide" id="PRO_0000012696" description="Granulin-2">
    <location>
        <begin position="123"/>
        <end position="179"/>
    </location>
</feature>
<feature type="peptide" id="PRO_0000012697" description="Granulin-3">
    <location>
        <begin position="206"/>
        <end position="261"/>
    </location>
</feature>
<feature type="peptide" id="PRO_0000012698" description="Granulin-4">
    <location>
        <begin position="281"/>
        <end position="336"/>
    </location>
</feature>
<feature type="peptide" id="PRO_0000012699" description="Granulin-5">
    <location>
        <begin position="364"/>
        <end position="417"/>
    </location>
</feature>
<feature type="peptide" id="PRO_0000012700" description="Granulin-6">
    <location>
        <begin position="442"/>
        <end position="496" status="uncertain"/>
    </location>
</feature>
<feature type="peptide" id="PRO_0000012701" description="Granulin-7">
    <location>
        <begin position="518" status="uncertain"/>
        <end position="573" status="uncertain"/>
    </location>
</feature>
<feature type="glycosylation site" description="N-linked (GlcNAc...) asparagine" evidence="12">
    <location>
        <position position="118"/>
    </location>
</feature>
<feature type="glycosylation site" description="N-linked (GlcNAc...) asparagine" evidence="3">
    <location>
        <position position="236"/>
    </location>
</feature>
<feature type="glycosylation site" description="N-linked (GlcNAc...) asparagine" evidence="10 12">
    <location>
        <position position="265"/>
    </location>
</feature>
<feature type="glycosylation site" description="N-linked (GlcNAc...) asparagine" evidence="12">
    <location>
        <position position="368"/>
    </location>
</feature>
<feature type="glycosylation site" description="N-linked (GlcNAc...) asparagine" evidence="12">
    <location>
        <position position="530"/>
    </location>
</feature>
<feature type="disulfide bond" evidence="8">
    <location>
        <begin position="126"/>
        <end position="139"/>
    </location>
</feature>
<feature type="disulfide bond" evidence="8">
    <location>
        <begin position="133"/>
        <end position="149"/>
    </location>
</feature>
<feature type="disulfide bond" evidence="8">
    <location>
        <begin position="284"/>
        <end position="296"/>
    </location>
</feature>
<feature type="disulfide bond" evidence="8">
    <location>
        <begin position="290"/>
        <end position="306"/>
    </location>
</feature>
<feature type="disulfide bond" evidence="8">
    <location>
        <begin position="297"/>
        <end position="314"/>
    </location>
</feature>
<feature type="disulfide bond" evidence="8">
    <location>
        <begin position="307"/>
        <end position="321"/>
    </location>
</feature>
<feature type="disulfide bond" evidence="8">
    <location>
        <begin position="315"/>
        <end position="328"/>
    </location>
</feature>
<feature type="disulfide bond" evidence="8">
    <location>
        <begin position="322"/>
        <end position="335"/>
    </location>
</feature>
<feature type="disulfide bond" evidence="8">
    <location>
        <begin position="366"/>
        <end position="378"/>
    </location>
</feature>
<feature type="disulfide bond" evidence="8">
    <location>
        <begin position="372"/>
        <end position="388"/>
    </location>
</feature>
<feature type="disulfide bond" evidence="8">
    <location>
        <begin position="397"/>
        <end position="410"/>
    </location>
</feature>
<feature type="disulfide bond" evidence="8">
    <location>
        <begin position="404"/>
        <end position="416"/>
    </location>
</feature>
<feature type="splice variant" id="VSP_053472" description="In isoform 3." evidence="23">
    <original>MWTLVSWVALTAGLVAGTRCPDGQFCPVACCLDPGGASYSCCRPLLDKWPTTLSRHLGGPCQVDAHCSAGH</original>
    <variation>MAITAAHGASTAVQTGDPASKDQVTTPWVPSSALIVSSNARTSPRAVLWSMAPGGAAPCPRLPAVKTGCTA</variation>
    <location>
        <begin position="1"/>
        <end position="71"/>
    </location>
</feature>
<feature type="splice variant" id="VSP_053473" description="In isoform 3." evidence="23">
    <location>
        <begin position="72"/>
        <end position="251"/>
    </location>
</feature>
<feature type="splice variant" id="VSP_001837" description="In isoform 2." evidence="25 29">
    <location>
        <begin position="377"/>
        <end position="531"/>
    </location>
</feature>
<feature type="sequence variant" id="VAR_044451" description="In FTD2; no significant difference in the total mRNA between cases and controls; although the mutant protein is expressed it is not secreted and appears to be trapped within an intracellular compartment; dbSNP:rs63751243." evidence="6 7">
    <original>A</original>
    <variation>D</variation>
    <location>
        <position position="9"/>
    </location>
</feature>
<feature type="sequence variant" id="VAR_064625" description="In dbSNP:rs63750723." evidence="11">
    <original>R</original>
    <variation>W</variation>
    <location>
        <position position="19"/>
    </location>
</feature>
<feature type="sequence variant" id="VAR_064626" description="In dbSNP:rs1555610922." evidence="11">
    <original>R</original>
    <variation>W</variation>
    <location>
        <position position="55"/>
    </location>
</feature>
<feature type="sequence variant" id="VAR_064627" description="In dbSNP:rs199944486." evidence="11">
    <original>A</original>
    <variation>T</variation>
    <location>
        <position position="69"/>
    </location>
</feature>
<feature type="sequence variant" id="VAR_064628" description="In dbSNP:rs758168578." evidence="11">
    <location>
        <position position="119"/>
    </location>
</feature>
<feature type="sequence variant" id="VAR_064629" description="In dbSNP:rs63750043." evidence="11">
    <original>S</original>
    <variation>Y</variation>
    <location>
        <position position="120"/>
    </location>
</feature>
<feature type="sequence variant" id="VAR_064630" description="In dbSNP:rs63750479." evidence="11">
    <original>T</original>
    <variation>M</variation>
    <location>
        <position position="182"/>
    </location>
</feature>
<feature type="sequence variant" id="VAR_064631" description="In dbSNP:rs758322775." evidence="11">
    <original>C</original>
    <variation>S</variation>
    <location>
        <position position="221"/>
    </location>
</feature>
<feature type="sequence variant" id="VAR_064632" description="In dbSNP:rs529849967." evidence="11">
    <original>P</original>
    <variation>L</variation>
    <location>
        <position position="275"/>
    </location>
</feature>
<feature type="sequence variant" id="VAR_064633" description="In dbSNP:rs143030899." evidence="11">
    <original>D</original>
    <variation>N</variation>
    <location>
        <position position="376"/>
    </location>
</feature>
<feature type="sequence variant" id="VAR_064634" description="In dbSNP:rs148213321." evidence="11">
    <original>S</original>
    <variation>L</variation>
    <location>
        <position position="398"/>
    </location>
</feature>
<feature type="sequence variant" id="VAR_064635" description="In dbSNP:rs114248177." evidence="11">
    <original>R</original>
    <variation>Q</variation>
    <location>
        <position position="433"/>
    </location>
</feature>
<feature type="sequence variant" id="VAR_014830" description="In dbSNP:rs25647." evidence="11">
    <original>G</original>
    <variation>A</variation>
    <location>
        <position position="515"/>
    </location>
</feature>
<feature type="sequence variant" id="VAR_064636" description="In dbSNP:rs971443926." evidence="11">
    <original>R</original>
    <variation>H</variation>
    <location>
        <position position="564"/>
    </location>
</feature>
<feature type="sequence conflict" description="In Ref. 12; AA sequence." evidence="30" ref="12">
    <original>S</original>
    <variation>H</variation>
    <location>
        <position position="219"/>
    </location>
</feature>
<feature type="sequence conflict" description="In Ref. 13; AA sequence." evidence="30" ref="13">
    <original>C</original>
    <variation>S</variation>
    <location>
        <position position="290"/>
    </location>
</feature>
<feature type="sequence conflict" description="In Ref. 12; AA sequence." evidence="30" ref="12">
    <original>W</original>
    <variation>H</variation>
    <location>
        <position position="386"/>
    </location>
</feature>
<feature type="sequence conflict" description="In Ref. 3; AAA58617." evidence="30" ref="3">
    <original>G</original>
    <variation>R</variation>
    <location>
        <position position="407"/>
    </location>
</feature>
<feature type="sequence conflict" description="In Ref. 8; BAD96242." evidence="30" ref="8">
    <original>K</original>
    <variation>E</variation>
    <location>
        <position position="428"/>
    </location>
</feature>
<feature type="sequence conflict" description="In Ref. 3; AAA58617." evidence="30" ref="3">
    <original>A</original>
    <variation>G</variation>
    <location>
        <position position="434"/>
    </location>
</feature>
<feature type="sequence conflict" description="In Ref. 3; AAA58617." evidence="30" ref="3">
    <original>Q</original>
    <variation>G</variation>
    <location>
        <position position="454"/>
    </location>
</feature>
<feature type="sequence conflict" description="In Ref. 3; AAA58617." evidence="30" ref="3">
    <original>L</original>
    <variation>Q</variation>
    <location>
        <position position="460"/>
    </location>
</feature>
<feature type="sequence conflict" description="In Ref. 3; AAA58617." evidence="30" ref="3">
    <original>R</original>
    <variation>A</variation>
    <location>
        <position position="547"/>
    </location>
</feature>
<feature type="sequence conflict" description="In Ref. 3; AAA58617." evidence="30" ref="3">
    <original>A</original>
    <variation>R</variation>
    <location>
        <position position="567"/>
    </location>
</feature>
<feature type="strand" evidence="36">
    <location>
        <begin position="137"/>
        <end position="141"/>
    </location>
</feature>
<feature type="strand" evidence="36">
    <location>
        <begin position="143"/>
        <end position="145"/>
    </location>
</feature>
<feature type="strand" evidence="36">
    <location>
        <begin position="147"/>
        <end position="151"/>
    </location>
</feature>
<feature type="strand" evidence="32">
    <location>
        <begin position="282"/>
        <end position="285"/>
    </location>
</feature>
<feature type="strand" evidence="32">
    <location>
        <begin position="288"/>
        <end position="290"/>
    </location>
</feature>
<feature type="strand" evidence="32">
    <location>
        <begin position="294"/>
        <end position="298"/>
    </location>
</feature>
<feature type="strand" evidence="32">
    <location>
        <begin position="304"/>
        <end position="308"/>
    </location>
</feature>
<feature type="strand" evidence="33">
    <location>
        <begin position="315"/>
        <end position="319"/>
    </location>
</feature>
<feature type="turn" evidence="33">
    <location>
        <begin position="330"/>
        <end position="333"/>
    </location>
</feature>
<feature type="turn" evidence="35">
    <location>
        <begin position="367"/>
        <end position="369"/>
    </location>
</feature>
<feature type="strand" evidence="34">
    <location>
        <begin position="377"/>
        <end position="380"/>
    </location>
</feature>
<feature type="strand" evidence="34">
    <location>
        <begin position="382"/>
        <end position="384"/>
    </location>
</feature>
<feature type="strand" evidence="34">
    <location>
        <begin position="386"/>
        <end position="389"/>
    </location>
</feature>
<feature type="turn" evidence="35">
    <location>
        <begin position="399"/>
        <end position="402"/>
    </location>
</feature>
<feature type="strand" evidence="34">
    <location>
        <begin position="409"/>
        <end position="411"/>
    </location>
</feature>
<feature type="turn" evidence="34">
    <location>
        <begin position="412"/>
        <end position="414"/>
    </location>
</feature>
<feature type="strand" evidence="34">
    <location>
        <begin position="415"/>
        <end position="417"/>
    </location>
</feature>
<protein>
    <recommendedName>
        <fullName evidence="27">Progranulin</fullName>
        <shortName evidence="27">PGRN</shortName>
    </recommendedName>
    <alternativeName>
        <fullName evidence="2">Acrogranin</fullName>
    </alternativeName>
    <alternativeName>
        <fullName evidence="26">Epithelin precursor</fullName>
    </alternativeName>
    <alternativeName>
        <fullName evidence="2">Glycoprotein of 88 Kda</fullName>
        <shortName>GP88</shortName>
        <shortName>Glycoprotein 88</shortName>
    </alternativeName>
    <alternativeName>
        <fullName evidence="24">Granulin precursor</fullName>
    </alternativeName>
    <alternativeName>
        <fullName evidence="2">PC cell-derived growth factor</fullName>
        <shortName evidence="28">PCDGF</shortName>
    </alternativeName>
    <alternativeName>
        <fullName evidence="22 26">Proepithelin</fullName>
        <shortName evidence="22">PEPI</shortName>
    </alternativeName>
    <component>
        <recommendedName>
            <fullName>Paragranulin</fullName>
        </recommendedName>
    </component>
    <component>
        <recommendedName>
            <fullName>Granulin-1</fullName>
        </recommendedName>
        <alternativeName>
            <fullName>Granulin G</fullName>
        </alternativeName>
    </component>
    <component>
        <recommendedName>
            <fullName>Granulin-2</fullName>
        </recommendedName>
        <alternativeName>
            <fullName>Granulin F</fullName>
        </alternativeName>
    </component>
    <component>
        <recommendedName>
            <fullName>Granulin-3</fullName>
        </recommendedName>
        <alternativeName>
            <fullName evidence="1">Epithelin-2</fullName>
        </alternativeName>
        <alternativeName>
            <fullName>Granulin B</fullName>
        </alternativeName>
    </component>
    <component>
        <recommendedName>
            <fullName>Granulin-4</fullName>
        </recommendedName>
        <alternativeName>
            <fullName evidence="1">Epithelin-1</fullName>
        </alternativeName>
        <alternativeName>
            <fullName>Granulin A</fullName>
        </alternativeName>
    </component>
    <component>
        <recommendedName>
            <fullName>Granulin-5</fullName>
        </recommendedName>
        <alternativeName>
            <fullName>Granulin C</fullName>
        </alternativeName>
    </component>
    <component>
        <recommendedName>
            <fullName>Granulin-6</fullName>
        </recommendedName>
        <alternativeName>
            <fullName>Granulin D</fullName>
        </alternativeName>
    </component>
    <component>
        <recommendedName>
            <fullName>Granulin-7</fullName>
        </recommendedName>
        <alternativeName>
            <fullName>Granulin E</fullName>
        </alternativeName>
    </component>
</protein>